<comment type="function">
    <text evidence="3 4 14 15 20 22 23 26 30 32 33">Plays a role in the mitochondrial apoptotic process (PubMed:10772918, PubMed:11060313, PubMed:16113678, PubMed:16199525, PubMed:18948948, PubMed:21199865, PubMed:21458670, PubMed:25609812, PubMed:36361894, PubMed:8358790, PubMed:8521816). Under normal conditions, BAX is largely cytosolic via constant retrotranslocation from mitochondria to the cytosol mediated by BCL2L1/Bcl-xL, which avoids accumulation of toxic BAX levels at the mitochondrial outer membrane (MOM) (PubMed:21458670). Under stress conditions, undergoes a conformation change that causes translocation to the mitochondrion membrane, leading to the release of cytochrome c that then triggers apoptosis (PubMed:10772918, PubMed:11060313, PubMed:16113678, PubMed:16199525, PubMed:18948948, PubMed:21199865, PubMed:21458670, PubMed:25609812, PubMed:8358790, PubMed:8521816). Promotes activation of CASP3, and thereby apoptosis (PubMed:10772918, PubMed:11060313, PubMed:16113678, PubMed:16199525, PubMed:18948948, PubMed:21199865, PubMed:21458670, PubMed:25609812, PubMed:8358790, PubMed:8521816).</text>
</comment>
<comment type="subunit">
    <text evidence="4 5 6 9 10 11 12 13 14 15 16 17 18 20 21 22 24 25 26 28 29 32">Homodimer. Forms higher oligomers under stress conditions. Forms heterooligomers with BAK (PubMed:29531808). Interacts with BCL2L11. Interaction with BCL2L11 promotes BAX oligomerization and association with mitochondrial membranes, with subsequent release of cytochrome c. Forms heterodimers with BCL2, BCL2L1 isoform Bcl-X(L), BCL2L2, MCL1 and A1 (PubMed:25609812). Interacts with SH3GLB1. Interacts with humanin; forms fibers with humanin which results in BAX conformational changes and sequestering of BAX into the fibers, preventing BAX activation (PubMed:12732850, PubMed:31690630). Interacts with SFN and YWHAZ; the interaction occurs in the cytoplasm. Under stress conditions, JNK-mediated phosphorylation of SFN and YWHAZ, releases BAX to mitochondria. Interacts with RNF144B, which regulates the ubiquitin-dependent stability of BAX. Interacts with CLU under stress conditions that cause a conformation change leading to BAX oligomerization and association with mitochondria. Does not interact with CLU in unstressed cells. Interacts with FAIM2/LFG2. Interacts with RTL10/BOP. Interacts (via a C-terminal 33 residues) with NOL3 (via CARD domain); inhibits BAX activation and translocation and consequently cytochrome c release from mitochondria. Interacts with GIMAP3/IAN4 and GIMAP5/IAN5; this interaction is increased, when cells initiate apoptosis upon IL2 withdrawal (PubMed:16509771). Interacts with IRF3; the interaction is direct, increases upon Sendai virus infection and mediates the formation of the apoptosis complex TOMM70:HSP90AA1:IRF3:BAX (PubMed:25609812). Interacts with MOAP1, facilitating BAX-dependent mitochondrial outer membrane permeabilization and apoptosis (PubMed:11060313, PubMed:16199525). Interacts with BCL2L10/BCL-B (PubMed:23235460). Interacts with non-acetylated XRCC6/Ku70; this interaction leads to BAX sequestration in the cytosol, away from the mitochondria, preventing BAX-mediated apoptosis (PubMed:15023334).</text>
</comment>
<comment type="subunit">
    <molecule>Isoform Sigma</molecule>
    <text evidence="3">Interacts with BCL2A1 and BCL2L1 isoform Bcl-X(L).</text>
</comment>
<comment type="subunit">
    <text evidence="7">(Microbial infection) Interacts with adenovirus E1B 19K protein; this interaction blocks BAX oligomerization (PubMed:11462023).</text>
</comment>
<comment type="subunit">
    <text evidence="10">(Microbial infection) Interacts with human cytomegalovirus/HHV-5 protein vMIA/UL37.</text>
</comment>
<comment type="subunit">
    <text evidence="27">(Microbial infection) Interacts with enterovirus protein 2B; this interaction activates BAX-induced apoptosis.</text>
</comment>
<comment type="interaction">
    <interactant intactId="EBI-516580">
        <id>Q07812</id>
    </interactant>
    <interactant intactId="EBI-519866">
        <id>Q16611</id>
        <label>BAK1</label>
    </interactant>
    <organismsDiffer>false</organismsDiffer>
    <experiments>6</experiments>
</comment>
<comment type="interaction">
    <interactant intactId="EBI-516580">
        <id>Q07812</id>
    </interactant>
    <interactant intactId="EBI-516580">
        <id>Q07812</id>
        <label>BAX</label>
    </interactant>
    <organismsDiffer>false</organismsDiffer>
    <experiments>28</experiments>
</comment>
<comment type="interaction">
    <interactant intactId="EBI-516580">
        <id>Q07812</id>
    </interactant>
    <interactant intactId="EBI-77694">
        <id>P10415</id>
        <label>BCL2</label>
    </interactant>
    <organismsDiffer>false</organismsDiffer>
    <experiments>16</experiments>
</comment>
<comment type="interaction">
    <interactant intactId="EBI-516580">
        <id>Q07812</id>
    </interactant>
    <interactant intactId="EBI-287195">
        <id>Q07817-1</id>
        <label>BCL2L1</label>
    </interactant>
    <organismsDiffer>false</organismsDiffer>
    <experiments>21</experiments>
</comment>
<comment type="interaction">
    <interactant intactId="EBI-516580">
        <id>Q07812</id>
    </interactant>
    <interactant intactId="EBI-2126349">
        <id>Q9HD36</id>
        <label>BCL2L10</label>
    </interactant>
    <organismsDiffer>false</organismsDiffer>
    <experiments>3</experiments>
</comment>
<comment type="interaction">
    <interactant intactId="EBI-516580">
        <id>Q07812</id>
    </interactant>
    <interactant intactId="EBI-526406">
        <id>O43521</id>
        <label>BCL2L11</label>
    </interactant>
    <organismsDiffer>false</organismsDiffer>
    <experiments>22</experiments>
</comment>
<comment type="interaction">
    <interactant intactId="EBI-516580">
        <id>Q07812</id>
    </interactant>
    <interactant intactId="EBI-3940897">
        <id>Q9HB09</id>
        <label>BCL2L12</label>
    </interactant>
    <organismsDiffer>false</organismsDiffer>
    <experiments>3</experiments>
</comment>
<comment type="interaction">
    <interactant intactId="EBI-516580">
        <id>Q07812</id>
    </interactant>
    <interactant intactId="EBI-707714">
        <id>Q92843</id>
        <label>BCL2L2</label>
    </interactant>
    <organismsDiffer>false</organismsDiffer>
    <experiments>7</experiments>
</comment>
<comment type="interaction">
    <interactant intactId="EBI-516580">
        <id>Q07812</id>
    </interactant>
    <interactant intactId="EBI-519672">
        <id>P55957</id>
        <label>BID</label>
    </interactant>
    <organismsDiffer>false</organismsDiffer>
    <experiments>17</experiments>
</comment>
<comment type="interaction">
    <interactant intactId="EBI-516580">
        <id>Q07812</id>
    </interactant>
    <interactant intactId="EBI-371750">
        <id>O75460</id>
        <label>ERN1</label>
    </interactant>
    <organismsDiffer>false</organismsDiffer>
    <experiments>2</experiments>
</comment>
<comment type="interaction">
    <interactant intactId="EBI-516580">
        <id>Q07812</id>
    </interactant>
    <interactant intactId="EBI-7116203">
        <id>O75031</id>
        <label>HSF2BP</label>
    </interactant>
    <organismsDiffer>false</organismsDiffer>
    <experiments>3</experiments>
</comment>
<comment type="interaction">
    <interactant intactId="EBI-516580">
        <id>Q07812</id>
    </interactant>
    <interactant intactId="EBI-8627664">
        <id>P22001</id>
        <label>KCNA3</label>
    </interactant>
    <organismsDiffer>false</organismsDiffer>
    <experiments>2</experiments>
</comment>
<comment type="interaction">
    <interactant intactId="EBI-516580">
        <id>Q07812</id>
    </interactant>
    <interactant intactId="EBI-1003422">
        <id>Q07820</id>
        <label>MCL1</label>
    </interactant>
    <organismsDiffer>false</organismsDiffer>
    <experiments>10</experiments>
</comment>
<comment type="interaction">
    <interactant intactId="EBI-516580">
        <id>Q07812</id>
    </interactant>
    <interactant intactId="EBI-8643752">
        <id>Q8IVG9</id>
        <label>MT-RNR2</label>
    </interactant>
    <organismsDiffer>false</organismsDiffer>
    <experiments>5</experiments>
</comment>
<comment type="interaction">
    <interactant intactId="EBI-516580">
        <id>Q07812</id>
    </interactant>
    <interactant intactId="EBI-751215">
        <id>Q9ULZ3</id>
        <label>PYCARD</label>
    </interactant>
    <organismsDiffer>false</organismsDiffer>
    <experiments>7</experiments>
</comment>
<comment type="interaction">
    <interactant intactId="EBI-516580">
        <id>Q07812</id>
    </interactant>
    <interactant intactId="EBI-2129982">
        <id>Q7Z419</id>
        <label>RNF144B</label>
    </interactant>
    <organismsDiffer>false</organismsDiffer>
    <experiments>5</experiments>
</comment>
<comment type="interaction">
    <interactant intactId="EBI-516580">
        <id>Q07812</id>
    </interactant>
    <interactant intactId="EBI-10697720">
        <id>Q7L3V2</id>
        <label>RTL10</label>
    </interactant>
    <organismsDiffer>false</organismsDiffer>
    <experiments>2</experiments>
</comment>
<comment type="interaction">
    <interactant intactId="EBI-516580">
        <id>Q07812</id>
    </interactant>
    <interactant intactId="EBI-5291808">
        <id>Q9Y371-1</id>
        <label>SH3GLB1</label>
    </interactant>
    <organismsDiffer>false</organismsDiffer>
    <experiments>2</experiments>
</comment>
<comment type="interaction">
    <interactant intactId="EBI-516580">
        <id>Q07812</id>
    </interactant>
    <interactant intactId="EBI-985879">
        <id>P37840</id>
        <label>SNCA</label>
    </interactant>
    <organismsDiffer>false</organismsDiffer>
    <experiments>4</experiments>
</comment>
<comment type="interaction">
    <interactant intactId="EBI-516580">
        <id>Q07812</id>
    </interactant>
    <interactant intactId="EBI-2952704">
        <id>Q9P2Y5</id>
        <label>UVRAG</label>
    </interactant>
    <organismsDiffer>false</organismsDiffer>
    <experiments>6</experiments>
</comment>
<comment type="interaction">
    <interactant intactId="EBI-516580">
        <id>Q07812</id>
    </interactant>
    <interactant intactId="EBI-353208">
        <id>P12956</id>
        <label>XRCC6</label>
    </interactant>
    <organismsDiffer>false</organismsDiffer>
    <experiments>2</experiments>
</comment>
<comment type="interaction">
    <interactant intactId="EBI-516580">
        <id>Q07812</id>
    </interactant>
    <interactant intactId="EBI-783400">
        <id>P70444</id>
        <label>Bid</label>
    </interactant>
    <organismsDiffer>true</organismsDiffer>
    <experiments>2</experiments>
</comment>
<comment type="interaction">
    <interactant intactId="EBI-516580">
        <id>Q07812</id>
    </interactant>
    <interactant intactId="EBI-2128640">
        <id>PRO_0000223236</id>
        <label>Bid</label>
        <dbReference type="UniProtKB" id="P70444"/>
    </interactant>
    <organismsDiffer>true</organismsDiffer>
    <experiments>2</experiments>
</comment>
<comment type="interaction">
    <interactant intactId="EBI-516580">
        <id>Q07812</id>
    </interactant>
    <interactant intactId="EBI-15572304">
        <id>Q99MI6</id>
        <label>Gimap3</label>
    </interactant>
    <organismsDiffer>true</organismsDiffer>
    <experiments>2</experiments>
</comment>
<comment type="interaction">
    <interactant intactId="EBI-516580">
        <id>Q07812</id>
    </interactant>
    <interactant intactId="EBI-15572348">
        <id>Q8BWF2</id>
        <label>Gimap5</label>
    </interactant>
    <organismsDiffer>true</organismsDiffer>
    <experiments>2</experiments>
</comment>
<comment type="interaction">
    <interactant intactId="EBI-516580">
        <id>Q07812</id>
    </interactant>
    <interactant intactId="EBI-707292">
        <id>P97287</id>
        <label>Mcl1</label>
    </interactant>
    <organismsDiffer>true</organismsDiffer>
    <experiments>2</experiments>
</comment>
<comment type="interaction">
    <interactant intactId="EBI-516580">
        <id>Q07812</id>
    </interactant>
    <interactant intactId="EBI-7115640">
        <id>P17361</id>
        <label>OPG035</label>
    </interactant>
    <organismsDiffer>true</organismsDiffer>
    <experiments>3</experiments>
</comment>
<comment type="interaction">
    <interactant intactId="EBI-516580">
        <id>Q07812</id>
    </interactant>
    <interactant intactId="EBI-12527">
        <id>P49334</id>
        <label>TOM22</label>
    </interactant>
    <organismsDiffer>true</organismsDiffer>
    <experiments>3</experiments>
</comment>
<comment type="interaction">
    <interactant intactId="EBI-516580">
        <id>Q07812</id>
    </interactant>
    <interactant intactId="EBI-12539">
        <id>P23644</id>
        <label>TOM40</label>
    </interactant>
    <organismsDiffer>true</organismsDiffer>
    <experiments>2</experiments>
</comment>
<comment type="interaction">
    <interactant intactId="EBI-516580">
        <id>Q07812</id>
    </interactant>
    <interactant intactId="EBI-1791540">
        <id>P24391</id>
        <label>tom40</label>
    </interactant>
    <organismsDiffer>true</organismsDiffer>
    <experiments>2</experiments>
</comment>
<comment type="interaction">
    <interactant intactId="EBI-516580">
        <id>Q07812</id>
    </interactant>
    <interactant intactId="EBI-12551">
        <id>P07213</id>
        <label>TOM70</label>
    </interactant>
    <organismsDiffer>true</organismsDiffer>
    <experiments>2</experiments>
</comment>
<comment type="interaction">
    <interactant intactId="EBI-516580">
        <id>Q07812</id>
    </interactant>
    <interactant intactId="EBI-16026491">
        <id>P16778</id>
        <label>UL37</label>
    </interactant>
    <organismsDiffer>true</organismsDiffer>
    <experiments>2</experiments>
</comment>
<comment type="interaction">
    <interactant intactId="EBI-516580">
        <id>Q07812</id>
    </interactant>
    <interactant intactId="EBI-9099462">
        <id>PRO_0000037647</id>
        <dbReference type="UniProtKB" id="P26662"/>
    </interactant>
    <organismsDiffer>true</organismsDiffer>
    <experiments>3</experiments>
</comment>
<comment type="subcellular location">
    <molecule>Isoform Alpha</molecule>
    <subcellularLocation>
        <location evidence="26 28">Mitochondrion outer membrane</location>
        <topology evidence="1">Single-pass membrane protein</topology>
    </subcellularLocation>
    <subcellularLocation>
        <location evidence="27 28">Cytoplasm</location>
    </subcellularLocation>
    <subcellularLocation>
        <location evidence="30">Nucleus</location>
    </subcellularLocation>
    <text evidence="26">Colocalizes with 14-3-3 proteins in the cytoplasm. Under stress conditions, undergoes a conformation change that causes release from JNK-phosphorylated 14-3-3 proteins and translocation to the mitochondrion membrane. Upon Sendai virus infection, recruited to the mitochondrion through interaction with IRF3 (PubMed:25609812).</text>
</comment>
<comment type="subcellular location">
    <molecule>Isoform Beta</molecule>
    <subcellularLocation>
        <location>Cytoplasm</location>
    </subcellularLocation>
</comment>
<comment type="subcellular location">
    <molecule>Isoform Gamma</molecule>
    <subcellularLocation>
        <location>Cytoplasm</location>
    </subcellularLocation>
</comment>
<comment type="subcellular location">
    <molecule>Isoform Delta</molecule>
    <subcellularLocation>
        <location evidence="41">Cytoplasm</location>
    </subcellularLocation>
</comment>
<comment type="alternative products">
    <event type="alternative splicing"/>
    <isoform>
        <id>Q07812-1</id>
        <name>Alpha</name>
        <sequence type="displayed"/>
    </isoform>
    <isoform>
        <id>Q07812-2</id>
        <id>Q07814-1</id>
        <name>Beta</name>
        <sequence type="described" ref="VSP_031237"/>
    </isoform>
    <isoform>
        <id>Q07812-3</id>
        <id>Q07815-1</id>
        <name>Gamma</name>
        <sequence type="described" ref="VSP_031234 VSP_031236"/>
    </isoform>
    <isoform>
        <id>Q07812-4</id>
        <id>P55269-1</id>
        <name>Delta</name>
        <sequence type="described" ref="VSP_031235"/>
    </isoform>
    <isoform>
        <id>Q07812-5</id>
        <name>Epsilon</name>
        <sequence type="described" ref="VSP_031240"/>
    </isoform>
    <isoform>
        <id>Q07812-6</id>
        <name>Zeta</name>
        <sequence type="described" ref="VSP_031239"/>
    </isoform>
    <isoform>
        <id>Q07812-7</id>
        <name>Psi</name>
        <sequence type="described" ref="VSP_031238"/>
    </isoform>
    <isoform>
        <id>Q07812-8</id>
        <name>Sigma</name>
        <sequence type="described" ref="VSP_037475"/>
    </isoform>
</comment>
<comment type="tissue specificity">
    <text evidence="3 8">Expressed in a wide variety of tissues. Isoform Psi is found in glial tumors. Isoform Alpha is expressed in spleen, breast, ovary, testis, colon and brain, and at low levels in skin and lung. Isoform Sigma is expressed in spleen, breast, ovary, testis, lung, colon, brain and at low levels in skin. Isoform Alpha and isoform Sigma are expressed in pro-myelocytic leukemia, histiocytic lymphoma, Burkitt's lymphoma, T-cell lymphoma, lymphoblastic leukemia, breast adenocarcinoma, ovary adenocarcinoma, prostate carcinoma, prostate adenocarcinoma, lung carcinoma, epidermoid carcinoma, small cell lung carcinoma and colon adenocarcinoma cell lines.</text>
</comment>
<comment type="domain">
    <text evidence="33">Intact BH3 motif is required by BIK, BID, BAK, BAD and BAX for their pro-apoptotic activity and for their interaction with anti-apoptotic members of the Bcl-2 family.</text>
</comment>
<comment type="PTM">
    <text evidence="19 30">Ubiquitinated in the absence of XRCC6/Ku70 (PubMed:18362350). Ubiquitination promotes protein degradation (PubMed:18362350). Ubiquitinated on Lys-128 and Lys-190. 'Lys-63'-linked polyubiquitin chains on Lys-128 are removed by USP12.</text>
</comment>
<comment type="similarity">
    <text evidence="41">Belongs to the Bcl-2 family.</text>
</comment>
<comment type="online information" name="Atlas of Genetics and Cytogenetics in Oncology and Haematology">
    <link uri="https://atlasgeneticsoncology.org/gene/128/BAX"/>
</comment>
<reference key="1">
    <citation type="journal article" date="1993" name="Cell">
        <title>Bcl-2 heterodimerizes in vivo with a conserved homolog, Bax, that accelerates programmed cell death.</title>
        <authorList>
            <person name="Oltvai Z.N."/>
            <person name="Milliman C.L."/>
            <person name="Korsmeyer S.J."/>
        </authorList>
    </citation>
    <scope>NUCLEOTIDE SEQUENCE [MRNA] (ISOFORMS ALPHA; BETA AND GAMMA)</scope>
    <scope>FUNCTION</scope>
    <scope>SUBUNIT</scope>
    <scope>SUBCELLULAR LOCATION</scope>
    <source>
        <tissue>B-cell</tissue>
    </source>
</reference>
<reference key="2">
    <citation type="journal article" date="1995" name="Genomics">
        <title>Mapping of the human BAX gene to chromosome 19q13.3-q13.4 and isolation of a novel alternatively spliced transcript, BAX delta.</title>
        <authorList>
            <person name="Apte S.S."/>
            <person name="Mattei M.-G."/>
            <person name="Olsen B.R."/>
        </authorList>
    </citation>
    <scope>NUCLEOTIDE SEQUENCE [MRNA] (ISOFORM DELTA)</scope>
</reference>
<reference key="3">
    <citation type="journal article" date="1999" name="Biochem. Biophys. Res. Commun.">
        <title>Identification and characterization of baxepsilon, a novel bax variant missing the BH2 and the transmembrane domains.</title>
        <authorList>
            <person name="Shi B."/>
            <person name="Triebe D."/>
            <person name="Kajiji S."/>
            <person name="Iwata K.K."/>
            <person name="Bruskin A."/>
            <person name="Mahajna J."/>
        </authorList>
    </citation>
    <scope>NUCLEOTIDE SEQUENCE [MRNA] (ISOFORM EPSILON)</scope>
    <source>
        <tissue>Brain</tissue>
    </source>
</reference>
<reference key="4">
    <citation type="journal article" date="2000" name="Biochem. Biophys. Res. Commun.">
        <title>Characterization of Bax-sigma, a cell death-inducing isoform of Bax.</title>
        <authorList>
            <person name="Schmitt E."/>
            <person name="Paquet C."/>
            <person name="Beauchemin M."/>
            <person name="Dever-Bertrand J."/>
            <person name="Bertrand R."/>
        </authorList>
    </citation>
    <scope>NUCLEOTIDE SEQUENCE [MRNA] (ISOFORMS ALPHA AND SIGMA)</scope>
    <scope>FUNCTION</scope>
    <scope>INTERACTION WITH BCL2A1 AND BCL2L1</scope>
    <scope>TISSUE SPECIFICITY</scope>
</reference>
<reference key="5">
    <citation type="journal article" date="2002" name="Hum. Mol. Genet.">
        <title>The expression of a new variant of the pro-apoptotic molecule Bax, Baxpsi, is correlated with an increased survival of glioblastoma multiforme patients.</title>
        <authorList>
            <person name="Cartron P.F."/>
            <person name="Oliver L."/>
            <person name="Martin S."/>
            <person name="Moreau C."/>
            <person name="LeCabellec M.T."/>
            <person name="Jezequel P."/>
            <person name="Meflah K."/>
            <person name="Vallette F.M."/>
        </authorList>
    </citation>
    <scope>NUCLEOTIDE SEQUENCE [MRNA] (ISOFORM PSI)</scope>
    <scope>TISSUE SPECIFICITY</scope>
</reference>
<reference key="6">
    <citation type="submission" date="2000-03" db="EMBL/GenBank/DDBJ databases">
        <title>Bax mRNA splice variant lacking exons 2 and 3.</title>
        <authorList>
            <person name="Perez R.P."/>
            <person name="Sanville H."/>
        </authorList>
    </citation>
    <scope>NUCLEOTIDE SEQUENCE [MRNA] (ISOFORM ZETA)</scope>
    <source>
        <tissue>Ovarian carcinoma</tissue>
    </source>
</reference>
<reference key="7">
    <citation type="journal article" date="2004" name="Nat. Genet.">
        <title>Complete sequencing and characterization of 21,243 full-length human cDNAs.</title>
        <authorList>
            <person name="Ota T."/>
            <person name="Suzuki Y."/>
            <person name="Nishikawa T."/>
            <person name="Otsuki T."/>
            <person name="Sugiyama T."/>
            <person name="Irie R."/>
            <person name="Wakamatsu A."/>
            <person name="Hayashi K."/>
            <person name="Sato H."/>
            <person name="Nagai K."/>
            <person name="Kimura K."/>
            <person name="Makita H."/>
            <person name="Sekine M."/>
            <person name="Obayashi M."/>
            <person name="Nishi T."/>
            <person name="Shibahara T."/>
            <person name="Tanaka T."/>
            <person name="Ishii S."/>
            <person name="Yamamoto J."/>
            <person name="Saito K."/>
            <person name="Kawai Y."/>
            <person name="Isono Y."/>
            <person name="Nakamura Y."/>
            <person name="Nagahari K."/>
            <person name="Murakami K."/>
            <person name="Yasuda T."/>
            <person name="Iwayanagi T."/>
            <person name="Wagatsuma M."/>
            <person name="Shiratori A."/>
            <person name="Sudo H."/>
            <person name="Hosoiri T."/>
            <person name="Kaku Y."/>
            <person name="Kodaira H."/>
            <person name="Kondo H."/>
            <person name="Sugawara M."/>
            <person name="Takahashi M."/>
            <person name="Kanda K."/>
            <person name="Yokoi T."/>
            <person name="Furuya T."/>
            <person name="Kikkawa E."/>
            <person name="Omura Y."/>
            <person name="Abe K."/>
            <person name="Kamihara K."/>
            <person name="Katsuta N."/>
            <person name="Sato K."/>
            <person name="Tanikawa M."/>
            <person name="Yamazaki M."/>
            <person name="Ninomiya K."/>
            <person name="Ishibashi T."/>
            <person name="Yamashita H."/>
            <person name="Murakawa K."/>
            <person name="Fujimori K."/>
            <person name="Tanai H."/>
            <person name="Kimata M."/>
            <person name="Watanabe M."/>
            <person name="Hiraoka S."/>
            <person name="Chiba Y."/>
            <person name="Ishida S."/>
            <person name="Ono Y."/>
            <person name="Takiguchi S."/>
            <person name="Watanabe S."/>
            <person name="Yosida M."/>
            <person name="Hotuta T."/>
            <person name="Kusano J."/>
            <person name="Kanehori K."/>
            <person name="Takahashi-Fujii A."/>
            <person name="Hara H."/>
            <person name="Tanase T.-O."/>
            <person name="Nomura Y."/>
            <person name="Togiya S."/>
            <person name="Komai F."/>
            <person name="Hara R."/>
            <person name="Takeuchi K."/>
            <person name="Arita M."/>
            <person name="Imose N."/>
            <person name="Musashino K."/>
            <person name="Yuuki H."/>
            <person name="Oshima A."/>
            <person name="Sasaki N."/>
            <person name="Aotsuka S."/>
            <person name="Yoshikawa Y."/>
            <person name="Matsunawa H."/>
            <person name="Ichihara T."/>
            <person name="Shiohata N."/>
            <person name="Sano S."/>
            <person name="Moriya S."/>
            <person name="Momiyama H."/>
            <person name="Satoh N."/>
            <person name="Takami S."/>
            <person name="Terashima Y."/>
            <person name="Suzuki O."/>
            <person name="Nakagawa S."/>
            <person name="Senoh A."/>
            <person name="Mizoguchi H."/>
            <person name="Goto Y."/>
            <person name="Shimizu F."/>
            <person name="Wakebe H."/>
            <person name="Hishigaki H."/>
            <person name="Watanabe T."/>
            <person name="Sugiyama A."/>
            <person name="Takemoto M."/>
            <person name="Kawakami B."/>
            <person name="Yamazaki M."/>
            <person name="Watanabe K."/>
            <person name="Kumagai A."/>
            <person name="Itakura S."/>
            <person name="Fukuzumi Y."/>
            <person name="Fujimori Y."/>
            <person name="Komiyama M."/>
            <person name="Tashiro H."/>
            <person name="Tanigami A."/>
            <person name="Fujiwara T."/>
            <person name="Ono T."/>
            <person name="Yamada K."/>
            <person name="Fujii Y."/>
            <person name="Ozaki K."/>
            <person name="Hirao M."/>
            <person name="Ohmori Y."/>
            <person name="Kawabata A."/>
            <person name="Hikiji T."/>
            <person name="Kobatake N."/>
            <person name="Inagaki H."/>
            <person name="Ikema Y."/>
            <person name="Okamoto S."/>
            <person name="Okitani R."/>
            <person name="Kawakami T."/>
            <person name="Noguchi S."/>
            <person name="Itoh T."/>
            <person name="Shigeta K."/>
            <person name="Senba T."/>
            <person name="Matsumura K."/>
            <person name="Nakajima Y."/>
            <person name="Mizuno T."/>
            <person name="Morinaga M."/>
            <person name="Sasaki M."/>
            <person name="Togashi T."/>
            <person name="Oyama M."/>
            <person name="Hata H."/>
            <person name="Watanabe M."/>
            <person name="Komatsu T."/>
            <person name="Mizushima-Sugano J."/>
            <person name="Satoh T."/>
            <person name="Shirai Y."/>
            <person name="Takahashi Y."/>
            <person name="Nakagawa K."/>
            <person name="Okumura K."/>
            <person name="Nagase T."/>
            <person name="Nomura N."/>
            <person name="Kikuchi H."/>
            <person name="Masuho Y."/>
            <person name="Yamashita R."/>
            <person name="Nakai K."/>
            <person name="Yada T."/>
            <person name="Nakamura Y."/>
            <person name="Ohara O."/>
            <person name="Isogai T."/>
            <person name="Sugano S."/>
        </authorList>
    </citation>
    <scope>NUCLEOTIDE SEQUENCE [LARGE SCALE MRNA] (ISOFORM ALPHA)</scope>
</reference>
<reference key="8">
    <citation type="submission" date="2003-01" db="EMBL/GenBank/DDBJ databases">
        <authorList>
            <consortium name="NIEHS SNPs program"/>
        </authorList>
    </citation>
    <scope>NUCLEOTIDE SEQUENCE [GENOMIC DNA]</scope>
</reference>
<reference key="9">
    <citation type="submission" date="2005-07" db="EMBL/GenBank/DDBJ databases">
        <authorList>
            <person name="Mural R.J."/>
            <person name="Istrail S."/>
            <person name="Sutton G.G."/>
            <person name="Florea L."/>
            <person name="Halpern A.L."/>
            <person name="Mobarry C.M."/>
            <person name="Lippert R."/>
            <person name="Walenz B."/>
            <person name="Shatkay H."/>
            <person name="Dew I."/>
            <person name="Miller J.R."/>
            <person name="Flanigan M.J."/>
            <person name="Edwards N.J."/>
            <person name="Bolanos R."/>
            <person name="Fasulo D."/>
            <person name="Halldorsson B.V."/>
            <person name="Hannenhalli S."/>
            <person name="Turner R."/>
            <person name="Yooseph S."/>
            <person name="Lu F."/>
            <person name="Nusskern D.R."/>
            <person name="Shue B.C."/>
            <person name="Zheng X.H."/>
            <person name="Zhong F."/>
            <person name="Delcher A.L."/>
            <person name="Huson D.H."/>
            <person name="Kravitz S.A."/>
            <person name="Mouchard L."/>
            <person name="Reinert K."/>
            <person name="Remington K.A."/>
            <person name="Clark A.G."/>
            <person name="Waterman M.S."/>
            <person name="Eichler E.E."/>
            <person name="Adams M.D."/>
            <person name="Hunkapiller M.W."/>
            <person name="Myers E.W."/>
            <person name="Venter J.C."/>
        </authorList>
    </citation>
    <scope>NUCLEOTIDE SEQUENCE [LARGE SCALE GENOMIC DNA]</scope>
</reference>
<reference key="10">
    <citation type="journal article" date="2004" name="Genome Res.">
        <title>The status, quality, and expansion of the NIH full-length cDNA project: the Mammalian Gene Collection (MGC).</title>
        <authorList>
            <consortium name="The MGC Project Team"/>
        </authorList>
    </citation>
    <scope>NUCLEOTIDE SEQUENCE [LARGE SCALE MRNA] (ISOFORM ALPHA)</scope>
    <source>
        <tissue>Skin</tissue>
    </source>
</reference>
<reference key="11">
    <citation type="journal article" date="1995" name="Leukemia">
        <title>Bax mutations in cell lines derived from hematological malignancies.</title>
        <authorList>
            <person name="Meijerink J.P.P."/>
            <person name="Smetsers T.F.C.M."/>
            <person name="Sloetjes A.W."/>
            <person name="Linders E.H.P."/>
            <person name="Mensink E.J.B.M."/>
        </authorList>
    </citation>
    <scope>NUCLEOTIDE SEQUENCE [MRNA] OF 63-77 AND 98-118</scope>
    <scope>VARIANTS ARG-67 AND VAL-108</scope>
</reference>
<reference key="12">
    <citation type="journal article" date="1995" name="EMBO J.">
        <title>A conserved domain in Bak, distinct from BH1 and BH2, mediates cell death and protein binding functions.</title>
        <authorList>
            <person name="Chittenden T."/>
            <person name="Flemington C."/>
            <person name="Houghton A.B."/>
            <person name="Ebb R.G."/>
            <person name="Gallo G.J."/>
            <person name="Elangovan B."/>
            <person name="Chinnadurai G."/>
            <person name="Lutz R.J."/>
        </authorList>
    </citation>
    <scope>MUTAGENESIS</scope>
    <scope>FUNCTION OF BH3 MOTIF</scope>
</reference>
<reference key="13">
    <citation type="journal article" date="1999" name="EMBO J.">
        <title>Conformation of the Bax C-terminus regulates subcellular location and cell death.</title>
        <authorList>
            <person name="Nechushtan A."/>
            <person name="Smith C.L."/>
            <person name="Hsu Y.-T."/>
            <person name="Youle R.J."/>
        </authorList>
    </citation>
    <scope>SUBCELLULAR LOCATION</scope>
    <scope>MUTAGENESIS OF SER-184</scope>
</reference>
<reference key="14">
    <citation type="journal article" date="2001" name="J. Biol. Chem.">
        <title>MAP-1, a novel proapoptotic protein containing a BH3-like motif that associates with Bax through its Bcl-2 homology domains.</title>
        <authorList>
            <person name="Tan K.O."/>
            <person name="Tan K.M.L."/>
            <person name="Chan S.-L."/>
            <person name="Yee K.S.Y."/>
            <person name="Bevort M."/>
            <person name="Ang K.C."/>
            <person name="Yu V.C."/>
        </authorList>
    </citation>
    <scope>FUNCTION</scope>
    <scope>INTERACTION WITH MOAP1</scope>
</reference>
<reference key="15">
    <citation type="journal article" date="2001" name="J. Biol. Chem.">
        <title>Molecular cloning and characterization of Bif-1. A novel Src homology 3 domain-containing protein that associates with Bax.</title>
        <authorList>
            <person name="Cuddeback S.M."/>
            <person name="Yamaguchi H."/>
            <person name="Komatsu K."/>
            <person name="Miyashita T."/>
            <person name="Yamada M."/>
            <person name="Wu C."/>
            <person name="Singh S."/>
            <person name="Wang H.-G."/>
        </authorList>
    </citation>
    <scope>INTERACTION WITH SH3GLB1</scope>
</reference>
<reference key="16">
    <citation type="journal article" date="2001" name="J. Virol.">
        <title>E1B 19K blocks Bax oligomerization and tumor necrosis factor alpha-mediated apoptosis.</title>
        <authorList>
            <person name="Sundararajan R."/>
            <person name="White E."/>
        </authorList>
    </citation>
    <scope>INTERACTION WITH ADENOVIRUS PROTEIN E1B 19K</scope>
</reference>
<reference key="17">
    <citation type="journal article" date="2003" name="Nature">
        <title>Humanin peptide suppresses apoptosis by interfering with Bax activation.</title>
        <authorList>
            <person name="Guo B."/>
            <person name="Zhai D."/>
            <person name="Cabezas E."/>
            <person name="Welsh K."/>
            <person name="Nouraini S."/>
            <person name="Satterthwait A.C."/>
            <person name="Reed J.C."/>
        </authorList>
    </citation>
    <scope>INTERACTION WITH HUMANIN</scope>
</reference>
<reference key="18">
    <citation type="journal article" date="2004" name="EMBO J.">
        <title>JNK promotes Bax translocation to mitochondria through phosphorylation of 14-3-3 proteins.</title>
        <authorList>
            <person name="Tsuruta F."/>
            <person name="Sunayama J."/>
            <person name="Mori Y."/>
            <person name="Hattori S."/>
            <person name="Shimizu S."/>
            <person name="Tsujimoto Y."/>
            <person name="Yoshioka K."/>
            <person name="Masuyama N."/>
            <person name="Gotoh Y."/>
        </authorList>
    </citation>
    <scope>INTERACTION WITH SFN AND YWHAZ</scope>
    <scope>SUBCELLULAR LOCATION</scope>
</reference>
<reference key="19">
    <citation type="journal article" date="2004" name="J. Biol. Chem.">
        <title>Apoptosis repressor with caspase recruitment domain protects against cell death by interfering with Bax activation.</title>
        <authorList>
            <person name="Gustafsson A.B."/>
            <person name="Tsai J.G."/>
            <person name="Logue S.E."/>
            <person name="Crow M.T."/>
            <person name="Gottlieb R.A."/>
        </authorList>
    </citation>
    <scope>INTERACTION WITH NOL3</scope>
</reference>
<reference key="20">
    <citation type="journal article" date="2004" name="J. Biol. Chem.">
        <title>An anti-apoptotic viral protein that recruits Bax to mitochondria.</title>
        <authorList>
            <person name="Poncet D."/>
            <person name="Larochette N."/>
            <person name="Pauleau A.L."/>
            <person name="Boya P."/>
            <person name="Jalil A.A."/>
            <person name="Cartron P.F."/>
            <person name="Vallette F."/>
            <person name="Schnebelen C."/>
            <person name="Bartle L.M."/>
            <person name="Skaletskaya A."/>
            <person name="Boutolleau D."/>
            <person name="Martinou J.C."/>
            <person name="Goldmacher V.S."/>
            <person name="Kroemer G."/>
            <person name="Zamzami N."/>
        </authorList>
    </citation>
    <scope>INTERACTION WITH HHV-5 PROTEIN UL37</scope>
</reference>
<reference key="21">
    <citation type="journal article" date="2005" name="Nat. Cell Biol.">
        <title>Clusterin inhibits apoptosis by interacting with activated Bax.</title>
        <authorList>
            <person name="Zhang H."/>
            <person name="Kim J.K."/>
            <person name="Edwards C.A."/>
            <person name="Xu Z."/>
            <person name="Taichman R."/>
            <person name="Wang C.Y."/>
        </authorList>
    </citation>
    <scope>FUNCTION</scope>
    <scope>SUBCELLULAR LOCATION</scope>
    <scope>INTERACTION WITH CLU</scope>
</reference>
<reference key="22">
    <citation type="journal article" date="2005" name="Proc. Natl. Acad. Sci. U.S.A.">
        <title>MAP-1 is a mitochondrial effector of Bax.</title>
        <authorList>
            <person name="Tan K.O."/>
            <person name="Fu N.Y."/>
            <person name="Sukumaran S.K."/>
            <person name="Chan S.L."/>
            <person name="Kang J.H."/>
            <person name="Poon K.L."/>
            <person name="Chen B.S."/>
            <person name="Yu V.C."/>
        </authorList>
    </citation>
    <scope>FUNCTION</scope>
    <scope>INTERACTION WITH MOAP1</scope>
</reference>
<reference key="23">
    <citation type="journal article" date="2006" name="Int. J. Mol. Med.">
        <title>Sequence analysis shows that Lifeguard belongs to a new evolutionarily conserved cytoprotective family.</title>
        <authorList>
            <person name="Reimers K."/>
            <person name="Choi C.Y."/>
            <person name="Mau-Thek E."/>
            <person name="Vogt P.M."/>
        </authorList>
    </citation>
    <scope>INTERACTION WITH FAIM2/LFG2</scope>
</reference>
<reference key="24">
    <citation type="journal article" date="2006" name="PLoS Biol.">
        <title>IAN family critically regulates survival and development of T lymphocytes.</title>
        <authorList>
            <person name="Nitta T."/>
            <person name="Nasreen M."/>
            <person name="Seike T."/>
            <person name="Goji A."/>
            <person name="Ohigashi I."/>
            <person name="Miyazaki T."/>
            <person name="Ohta T."/>
            <person name="Kanno M."/>
            <person name="Takahama Y."/>
        </authorList>
    </citation>
    <scope>INTERACTION WITH GIMAP3 AND GIMAP5</scope>
</reference>
<reference key="25">
    <citation type="journal article" date="2009" name="Anal. Chem.">
        <title>Lys-N and trypsin cover complementary parts of the phosphoproteome in a refined SCX-based approach.</title>
        <authorList>
            <person name="Gauci S."/>
            <person name="Helbig A.O."/>
            <person name="Slijper M."/>
            <person name="Krijgsveld J."/>
            <person name="Heck A.J."/>
            <person name="Mohammed S."/>
        </authorList>
    </citation>
    <scope>ACETYLATION [LARGE SCALE ANALYSIS] AT MET-1</scope>
    <scope>IDENTIFICATION BY MASS SPECTROMETRY [LARGE SCALE ANALYSIS]</scope>
</reference>
<reference key="26">
    <citation type="journal article" date="2010" name="EMBO J.">
        <title>IBRDC2, an IBR-type E3 ubiquitin ligase, is a regulatory factor for Bax and apoptosis activation.</title>
        <authorList>
            <person name="Benard G."/>
            <person name="Neutzner A."/>
            <person name="Peng G."/>
            <person name="Wang C."/>
            <person name="Livak F."/>
            <person name="Youle R.J."/>
            <person name="Karbowski M."/>
        </authorList>
    </citation>
    <scope>INTERACTION WITH RNF144B</scope>
</reference>
<reference key="27">
    <citation type="journal article" date="2011" name="BMC Syst. Biol.">
        <title>Initial characterization of the human central proteome.</title>
        <authorList>
            <person name="Burkard T.R."/>
            <person name="Planyavsky M."/>
            <person name="Kaupe I."/>
            <person name="Breitwieser F.P."/>
            <person name="Buerckstuemmer T."/>
            <person name="Bennett K.L."/>
            <person name="Superti-Furga G."/>
            <person name="Colinge J."/>
        </authorList>
    </citation>
    <scope>IDENTIFICATION BY MASS SPECTROMETRY [LARGE SCALE ANALYSIS]</scope>
</reference>
<reference key="28">
    <citation type="journal article" date="2011" name="Cell">
        <title>Bcl-x(L) retrotranslocates Bax from the mitochondria into the cytosol.</title>
        <authorList>
            <person name="Edlich F."/>
            <person name="Banerjee S."/>
            <person name="Suzuki M."/>
            <person name="Cleland M.M."/>
            <person name="Arnoult D."/>
            <person name="Wang C."/>
            <person name="Neutzner A."/>
            <person name="Tjandra N."/>
            <person name="Youle R.J."/>
        </authorList>
    </citation>
    <scope>FUNCTION</scope>
    <scope>SUBCELLULAR LOCATION</scope>
    <scope>INTERACTION WITH BCL2L1</scope>
</reference>
<reference key="29">
    <citation type="journal article" date="2012" name="Cell Death Dis.">
        <title>The restricted binding repertoire of Bcl-B leaves Bim as the universal BH3-only prosurvival Bcl-2 protein antagonist.</title>
        <authorList>
            <person name="Rautureau G.J."/>
            <person name="Yabal M."/>
            <person name="Yang H."/>
            <person name="Huang D.C."/>
            <person name="Kvansakul M."/>
            <person name="Hinds M.G."/>
        </authorList>
    </citation>
    <scope>INTERACTION WITH BCL2L10</scope>
</reference>
<reference key="30">
    <citation type="journal article" date="2012" name="Protein Cell">
        <title>Human Bop is a novel BH3-only member of the Bcl-2 protein family.</title>
        <authorList>
            <person name="Zhang X."/>
            <person name="Weng C."/>
            <person name="Li Y."/>
            <person name="Wang X."/>
            <person name="Jiang C."/>
            <person name="Li X."/>
            <person name="Xu Y."/>
            <person name="Chen Q."/>
            <person name="Pan L."/>
            <person name="Tang H."/>
        </authorList>
    </citation>
    <scope>INTERACTION WITH RTL10/BOP</scope>
</reference>
<reference key="31">
    <citation type="journal article" date="2015" name="J. Virol.">
        <title>Tom70 mediates Sendai virus-induced apoptosis on mitochondria.</title>
        <authorList>
            <person name="Wei B."/>
            <person name="Cui Y."/>
            <person name="Huang Y."/>
            <person name="Liu H."/>
            <person name="Li L."/>
            <person name="Li M."/>
            <person name="Ruan K.C."/>
            <person name="Zhou Q."/>
            <person name="Wang C."/>
        </authorList>
    </citation>
    <scope>FUNCTION</scope>
    <scope>INTERACTION WITH IRF3 AND BCL2</scope>
    <scope>SUBCELLULAR LOCATION</scope>
</reference>
<reference key="32">
    <citation type="journal article" date="2015" name="Proteomics">
        <title>N-terminome analysis of the human mitochondrial proteome.</title>
        <authorList>
            <person name="Vaca Jacome A.S."/>
            <person name="Rabilloud T."/>
            <person name="Schaeffer-Reiss C."/>
            <person name="Rompais M."/>
            <person name="Ayoub D."/>
            <person name="Lane L."/>
            <person name="Bairoch A."/>
            <person name="Van Dorsselaer A."/>
            <person name="Carapito C."/>
        </authorList>
    </citation>
    <scope>ACETYLATION [LARGE SCALE ANALYSIS] AT MET-1</scope>
    <scope>IDENTIFICATION BY MASS SPECTROMETRY [LARGE SCALE ANALYSIS]</scope>
</reference>
<reference key="33">
    <citation type="journal article" date="2016" name="J. Virol.">
        <title>Enterovirus 71 2B induces cell apoptosis by directly inducing the conformational activation of the proapoptotic protein Bax.</title>
        <authorList>
            <person name="Cong H."/>
            <person name="Du N."/>
            <person name="Yang Y."/>
            <person name="Song L."/>
            <person name="Zhang W."/>
            <person name="Tien P."/>
        </authorList>
    </citation>
    <scope>INTERACTION WITH ENTEROVIRUS 71 PROTEIN 2B</scope>
    <scope>SUBCELLULAR LOCATION</scope>
</reference>
<reference key="34">
    <citation type="journal article" date="2018" name="Cell. Death. Discov.">
        <title>PLEKHN1 promotes apoptosis by enhancing Bax-Bak hetero-oligomerization through interaction with Bid in human colon cancer.</title>
        <authorList>
            <person name="Kuriyama S."/>
            <person name="Tsuji T."/>
            <person name="Sakuma T."/>
            <person name="Yamamoto T."/>
            <person name="Tanaka M."/>
        </authorList>
    </citation>
    <scope>SUBUNIT</scope>
    <scope>SUBCELLULAR LOCATION</scope>
</reference>
<reference key="35">
    <citation type="journal article" date="2019" name="J. Biol. Chem.">
        <title>Humanin induces conformational changes in the apoptosis regulator BAX and sequesters it into fibers, preventing mitochondrial outer-membrane permeabilization.</title>
        <authorList>
            <person name="Morris D.L."/>
            <person name="Kastner D.W."/>
            <person name="Johnson S."/>
            <person name="Strub M.P."/>
            <person name="He Y."/>
            <person name="Bleck C.K.E."/>
            <person name="Lee D.Y."/>
            <person name="Tjandra N."/>
        </authorList>
    </citation>
    <scope>FORMATION OF FIBERS WITH HUMANIN</scope>
    <scope>MUTAGENESIS OF 172-THR--GLY-192 AND SER-184</scope>
</reference>
<reference key="36">
    <citation type="journal article" date="2022" name="Int. J. Mol. Sci.">
        <title>Deubiquitinating Enzyme USP12 Regulates the Pro-Apoptosis Protein Bax.</title>
        <authorList>
            <person name="Choi H.S."/>
            <person name="Lim E.S."/>
            <person name="Baek K.H."/>
        </authorList>
    </citation>
    <scope>FUNCTION</scope>
    <scope>DEUBIQUITINATION BY USP12</scope>
    <scope>MUTAGENESIS OF LYS-128; LYS-189 AND LYS-190</scope>
    <scope>SUBCELLULAR LOCATION</scope>
    <scope>UBIQUITINATION AT LYS-128 AND LYS-190</scope>
</reference>
<reference key="37">
    <citation type="journal article" date="2000" name="Cell">
        <title>Structure of Bax: coregulation of dimer formation and intracellular localization.</title>
        <authorList>
            <person name="Suzuki M."/>
            <person name="Youle R.J."/>
            <person name="Tjandra N."/>
        </authorList>
    </citation>
    <scope>STRUCTURE BY NMR</scope>
    <scope>SUBCELLULAR LOCATION</scope>
    <scope>SUBUNIT</scope>
</reference>
<reference key="38">
    <citation type="journal article" date="2007" name="Cell Death Differ.">
        <title>Elucidation of some Bax conformational changes through crystallization of an antibody-peptide complex.</title>
        <authorList>
            <person name="Peyerl F.W."/>
            <person name="Dai S."/>
            <person name="Murphy G.A."/>
            <person name="Crawford F."/>
            <person name="White J."/>
            <person name="Marrack P."/>
            <person name="Kappler J.W."/>
        </authorList>
    </citation>
    <scope>X-RAY CRYSTALLOGRAPHY (2.3 ANGSTROMS) OF 13-19 IN COMPLEX WITH ANTIBODY FRAGMENT</scope>
</reference>
<reference key="39">
    <citation type="journal article" date="2008" name="Nature">
        <title>BAX activation is initiated at a novel interaction site.</title>
        <authorList>
            <person name="Gavathiotis E."/>
            <person name="Suzuki M."/>
            <person name="Davis M.L."/>
            <person name="Pitter K."/>
            <person name="Bird G.H."/>
            <person name="Katz S.G."/>
            <person name="Tu H.C."/>
            <person name="Kim H."/>
            <person name="Cheng E.H."/>
            <person name="Tjandra N."/>
            <person name="Walensky L.D."/>
        </authorList>
    </citation>
    <scope>STRUCTURE BY NMR IN COMPLEX WITH BCL2L11</scope>
    <scope>FUNCTION</scope>
    <scope>SUBUNIT</scope>
    <scope>MUTAGENESIS OF LYS-21</scope>
    <scope>INTERACTION WITH BCL2L11</scope>
</reference>
<reference key="40">
    <citation type="journal article" date="2011" name="J. Biol. Chem.">
        <title>Mutation to Bax beyond the BH3 domain disrupts interactions with pro-survival proteins and promotes apoptosis.</title>
        <authorList>
            <person name="Czabotar P.E."/>
            <person name="Lee E.F."/>
            <person name="Thompson G.V."/>
            <person name="Wardak A.Z."/>
            <person name="Fairlie W.D."/>
            <person name="Colman P.M."/>
        </authorList>
    </citation>
    <scope>X-RAY CRYSTALLOGRAPHY (2.49 ANGSTROMS) OF 48-81 IN COMPLEXES WITH BCL2L1 AND MCL1</scope>
    <scope>INTERACTION WITH MCL1; BCL2; BCL2L1 AND BCL2L2</scope>
    <scope>FUNCTION</scope>
    <scope>MUTAGENESIS OF MET-74</scope>
</reference>
<reference key="41">
    <citation type="journal article" date="1998" name="Blood">
        <title>Hematopoietic malignancies demonstrate loss-of-function mutations of BAX.</title>
        <authorList>
            <person name="Meijerink J.P.P."/>
            <person name="Mensink E.J.B.M."/>
            <person name="Wang K."/>
            <person name="Sedlak T.W."/>
            <person name="Sloetjes A.W."/>
            <person name="de Witte T."/>
            <person name="Waksman G."/>
            <person name="Korsmeyer S.J."/>
        </authorList>
    </citation>
    <scope>VARIANTS GLU-11; ARG-67 AND VAL-108</scope>
</reference>
<reference key="42">
    <citation type="journal article" date="2004" name="Mol. Cell">
        <title>Acetylation of the C terminus of Ku70 by CBP and PCAF controls Bax-mediated apoptosis.</title>
        <authorList>
            <person name="Cohen H.Y."/>
            <person name="Lavu S."/>
            <person name="Bitterman K.J."/>
            <person name="Hekking B."/>
            <person name="Imahiyerobo T.A."/>
            <person name="Miller C."/>
            <person name="Frye R."/>
            <person name="Ploegh H."/>
            <person name="Kessler B.M."/>
            <person name="Sinclair D.A."/>
        </authorList>
    </citation>
    <scope>INTERACTION WITH XRCC6</scope>
</reference>
<reference key="43">
    <citation type="journal article" date="2008" name="Proc. Natl. Acad. Sci. U.S.A.">
        <title>Regulation of the proapoptotic factor Bax by Ku70-dependent deubiquitylation.</title>
        <authorList>
            <person name="Amsel A.D."/>
            <person name="Rathaus M."/>
            <person name="Kronman N."/>
            <person name="Cohen H.Y."/>
        </authorList>
    </citation>
    <scope>UBIQUITINATION</scope>
</reference>
<accession>Q07812</accession>
<accession>A8K4W1</accession>
<accession>P55269</accession>
<accession>Q07814</accession>
<accession>Q07815</accession>
<accession>Q8WZ49</accession>
<accession>Q9NR76</accession>
<accession>Q9NYG7</accession>
<accession>Q9UCZ6</accession>
<accession>Q9UCZ7</accession>
<accession>Q9UQD6</accession>
<evidence type="ECO:0000255" key="1"/>
<evidence type="ECO:0000269" key="2">
    <source>
    </source>
</evidence>
<evidence type="ECO:0000269" key="3">
    <source>
    </source>
</evidence>
<evidence type="ECO:0000269" key="4">
    <source>
    </source>
</evidence>
<evidence type="ECO:0000269" key="5">
    <source>
    </source>
</evidence>
<evidence type="ECO:0000269" key="6">
    <source>
    </source>
</evidence>
<evidence type="ECO:0000269" key="7">
    <source>
    </source>
</evidence>
<evidence type="ECO:0000269" key="8">
    <source>
    </source>
</evidence>
<evidence type="ECO:0000269" key="9">
    <source>
    </source>
</evidence>
<evidence type="ECO:0000269" key="10">
    <source>
    </source>
</evidence>
<evidence type="ECO:0000269" key="11">
    <source>
    </source>
</evidence>
<evidence type="ECO:0000269" key="12">
    <source>
    </source>
</evidence>
<evidence type="ECO:0000269" key="13">
    <source>
    </source>
</evidence>
<evidence type="ECO:0000269" key="14">
    <source>
    </source>
</evidence>
<evidence type="ECO:0000269" key="15">
    <source>
    </source>
</evidence>
<evidence type="ECO:0000269" key="16">
    <source>
    </source>
</evidence>
<evidence type="ECO:0000269" key="17">
    <source>
    </source>
</evidence>
<evidence type="ECO:0000269" key="18">
    <source>
    </source>
</evidence>
<evidence type="ECO:0000269" key="19">
    <source>
    </source>
</evidence>
<evidence type="ECO:0000269" key="20">
    <source>
    </source>
</evidence>
<evidence type="ECO:0000269" key="21">
    <source>
    </source>
</evidence>
<evidence type="ECO:0000269" key="22">
    <source>
    </source>
</evidence>
<evidence type="ECO:0000269" key="23">
    <source>
    </source>
</evidence>
<evidence type="ECO:0000269" key="24">
    <source>
    </source>
</evidence>
<evidence type="ECO:0000269" key="25">
    <source>
    </source>
</evidence>
<evidence type="ECO:0000269" key="26">
    <source>
    </source>
</evidence>
<evidence type="ECO:0000269" key="27">
    <source>
    </source>
</evidence>
<evidence type="ECO:0000269" key="28">
    <source>
    </source>
</evidence>
<evidence type="ECO:0000269" key="29">
    <source>
    </source>
</evidence>
<evidence type="ECO:0000269" key="30">
    <source>
    </source>
</evidence>
<evidence type="ECO:0000269" key="31">
    <source>
    </source>
</evidence>
<evidence type="ECO:0000269" key="32">
    <source>
    </source>
</evidence>
<evidence type="ECO:0000269" key="33">
    <source>
    </source>
</evidence>
<evidence type="ECO:0000269" key="34">
    <source>
    </source>
</evidence>
<evidence type="ECO:0000303" key="35">
    <source>
    </source>
</evidence>
<evidence type="ECO:0000303" key="36">
    <source>
    </source>
</evidence>
<evidence type="ECO:0000303" key="37">
    <source>
    </source>
</evidence>
<evidence type="ECO:0000303" key="38">
    <source>
    </source>
</evidence>
<evidence type="ECO:0000303" key="39">
    <source>
    </source>
</evidence>
<evidence type="ECO:0000303" key="40">
    <source ref="6"/>
</evidence>
<evidence type="ECO:0000305" key="41"/>
<evidence type="ECO:0007744" key="42">
    <source>
    </source>
</evidence>
<evidence type="ECO:0007744" key="43">
    <source>
    </source>
</evidence>
<evidence type="ECO:0007829" key="44">
    <source>
        <dbReference type="PDB" id="1F16"/>
    </source>
</evidence>
<evidence type="ECO:0007829" key="45">
    <source>
        <dbReference type="PDB" id="2K7W"/>
    </source>
</evidence>
<evidence type="ECO:0007829" key="46">
    <source>
        <dbReference type="PDB" id="4ZIE"/>
    </source>
</evidence>
<evidence type="ECO:0007829" key="47">
    <source>
        <dbReference type="PDB" id="5W60"/>
    </source>
</evidence>
<protein>
    <recommendedName>
        <fullName>Apoptosis regulator BAX</fullName>
    </recommendedName>
    <alternativeName>
        <fullName>Bcl-2-like protein 4</fullName>
        <shortName>Bcl2-L-4</shortName>
    </alternativeName>
</protein>
<organism>
    <name type="scientific">Homo sapiens</name>
    <name type="common">Human</name>
    <dbReference type="NCBI Taxonomy" id="9606"/>
    <lineage>
        <taxon>Eukaryota</taxon>
        <taxon>Metazoa</taxon>
        <taxon>Chordata</taxon>
        <taxon>Craniata</taxon>
        <taxon>Vertebrata</taxon>
        <taxon>Euteleostomi</taxon>
        <taxon>Mammalia</taxon>
        <taxon>Eutheria</taxon>
        <taxon>Euarchontoglires</taxon>
        <taxon>Primates</taxon>
        <taxon>Haplorrhini</taxon>
        <taxon>Catarrhini</taxon>
        <taxon>Hominidae</taxon>
        <taxon>Homo</taxon>
    </lineage>
</organism>
<gene>
    <name type="primary">BAX</name>
    <name type="synonym">BCL2L4</name>
</gene>
<feature type="chain" id="PRO_0000143053" description="Apoptosis regulator BAX">
    <location>
        <begin position="1"/>
        <end position="192"/>
    </location>
</feature>
<feature type="transmembrane region" description="Helical" evidence="1">
    <location>
        <begin position="172"/>
        <end position="192"/>
    </location>
</feature>
<feature type="short sequence motif" description="BH3" evidence="33">
    <location>
        <begin position="59"/>
        <end position="73"/>
    </location>
</feature>
<feature type="short sequence motif" description="BH1">
    <location>
        <begin position="98"/>
        <end position="118"/>
    </location>
</feature>
<feature type="short sequence motif" description="BH2">
    <location>
        <begin position="150"/>
        <end position="165"/>
    </location>
</feature>
<feature type="modified residue" description="N-acetylmethionine" evidence="42 43">
    <location>
        <position position="1"/>
    </location>
</feature>
<feature type="cross-link" description="Glycyl lysine isopeptide (Lys-Gly) (interchain with G-Cter in ubiquitin)" evidence="30">
    <location>
        <position position="128"/>
    </location>
</feature>
<feature type="cross-link" description="Glycyl lysine isopeptide (Lys-Gly) (interchain with G-Cter in ubiquitin)" evidence="30">
    <location>
        <position position="190"/>
    </location>
</feature>
<feature type="splice variant" id="VSP_031239" description="In isoform Zeta." evidence="40">
    <location>
        <begin position="1"/>
        <end position="78"/>
    </location>
</feature>
<feature type="splice variant" id="VSP_031238" description="In isoform Psi." evidence="36">
    <location>
        <begin position="1"/>
        <end position="19"/>
    </location>
</feature>
<feature type="splice variant" id="VSP_031234" description="In isoform Gamma." evidence="38">
    <original>GPTSSEQIMKTGALLLQGFIQDRAGRMGGE</original>
    <variation>VSSRIEQGEWGGRHPSWPWTRCLRMRPPRS</variation>
    <location>
        <begin position="12"/>
        <end position="41"/>
    </location>
</feature>
<feature type="splice variant" id="VSP_031235" description="In isoform Delta." evidence="37">
    <location>
        <begin position="30"/>
        <end position="78"/>
    </location>
</feature>
<feature type="splice variant" id="VSP_031236" description="In isoform Gamma." evidence="38">
    <location>
        <begin position="42"/>
        <end position="192"/>
    </location>
</feature>
<feature type="splice variant" id="VSP_031240" description="In isoform Epsilon." evidence="39">
    <original>LCTKVPELIRTIMGWTLDFLRERLLGWIQDQGGWDGLLSYFGTPTWQTVTIFVAGVLTASLTIWKKMG</original>
    <variation>GVKWRDLGSLQPLPPGFKRFTCLSIPRSWDYRPCAPRCRN</variation>
    <location>
        <begin position="125"/>
        <end position="192"/>
    </location>
</feature>
<feature type="splice variant" id="VSP_031237" description="In isoform Beta." evidence="38">
    <original>DGLLSYFGTPTWQTVTIFVAGVLTASLTIWKKMG</original>
    <variation>VRLLKPPHPHHRALTTAPAPPSLPPATPLGPWAFWSRSQWCPLPIFRSSDVVYNAFSLRV</variation>
    <location>
        <begin position="159"/>
        <end position="192"/>
    </location>
</feature>
<feature type="splice variant" id="VSP_037475" description="In isoform Sigma." evidence="35">
    <location>
        <begin position="159"/>
        <end position="171"/>
    </location>
</feature>
<feature type="sequence variant" id="VAR_013575" description="In a plasmacytoma cell line; dbSNP:rs555248599." evidence="34">
    <original>G</original>
    <variation>E</variation>
    <location>
        <position position="11"/>
    </location>
</feature>
<feature type="sequence variant" id="VAR_047053" description="In dbSNP:rs36017265.">
    <original>G</original>
    <variation>R</variation>
    <location>
        <position position="39"/>
    </location>
</feature>
<feature type="sequence variant" id="VAR_007809" description="In a T-cell acute lymphoblastic leukemia cell line; loss of heterodimerization with Bcl-2 or Bcl-X(L); dbSNP:rs398122513." evidence="31 34">
    <original>G</original>
    <variation>R</variation>
    <location>
        <position position="67"/>
    </location>
</feature>
<feature type="sequence variant" id="VAR_013576" description="In a Burkitt lymphoma; loss of homodimerization." evidence="31 34">
    <original>G</original>
    <variation>V</variation>
    <location>
        <position position="108"/>
    </location>
</feature>
<feature type="mutagenesis site" description="Reduces interaction with BCL2L11, homooligomerization and triggering of apoptosis." evidence="20">
    <original>K</original>
    <variation>E</variation>
    <location>
        <position position="21"/>
    </location>
</feature>
<feature type="mutagenesis site" description="Strongly reduced interaction with MCL1, BCL2, BCL2L1 and BCL2L2. No effect on cytochrome c release and subsequent apoptosis triggered by etoposide." evidence="22">
    <original>M</original>
    <variation>D</variation>
    <variation>E</variation>
    <location>
        <position position="74"/>
    </location>
</feature>
<feature type="mutagenesis site" description="Partial loss of polyubiquitination." evidence="30">
    <original>K</original>
    <variation>R</variation>
    <location>
        <position position="128"/>
    </location>
</feature>
<feature type="mutagenesis site" description="Enhanced fiber formation with humanin." evidence="29">
    <location>
        <begin position="172"/>
        <end position="192"/>
    </location>
</feature>
<feature type="mutagenesis site" description="Constitutive cytoplasmic location." evidence="2">
    <original>S</original>
    <variation>D</variation>
    <variation>E</variation>
    <variation>H</variation>
    <variation>K</variation>
    <location>
        <position position="184"/>
    </location>
</feature>
<feature type="mutagenesis site" description="Constitutive mitochondrial location. Enhanced fiber formation with humanin." evidence="2 29">
    <original>S</original>
    <variation>V</variation>
    <location>
        <position position="184"/>
    </location>
</feature>
<feature type="mutagenesis site" description="No loss of polyubiquitination." evidence="30">
    <original>K</original>
    <variation>R</variation>
    <location>
        <position position="189"/>
    </location>
</feature>
<feature type="mutagenesis site" description="Partial loss of polyubiquitination." evidence="30">
    <original>K</original>
    <variation>R</variation>
    <location>
        <position position="190"/>
    </location>
</feature>
<feature type="turn" evidence="45">
    <location>
        <begin position="2"/>
        <end position="4"/>
    </location>
</feature>
<feature type="strand" evidence="44">
    <location>
        <begin position="10"/>
        <end position="14"/>
    </location>
</feature>
<feature type="helix" evidence="46">
    <location>
        <begin position="16"/>
        <end position="34"/>
    </location>
</feature>
<feature type="helix" evidence="45">
    <location>
        <begin position="36"/>
        <end position="38"/>
    </location>
</feature>
<feature type="strand" evidence="47">
    <location>
        <begin position="39"/>
        <end position="41"/>
    </location>
</feature>
<feature type="helix" evidence="47">
    <location>
        <begin position="43"/>
        <end position="45"/>
    </location>
</feature>
<feature type="helix" evidence="46">
    <location>
        <begin position="54"/>
        <end position="71"/>
    </location>
</feature>
<feature type="helix" evidence="46">
    <location>
        <begin position="74"/>
        <end position="82"/>
    </location>
</feature>
<feature type="strand" evidence="47">
    <location>
        <begin position="85"/>
        <end position="87"/>
    </location>
</feature>
<feature type="helix" evidence="46">
    <location>
        <begin position="88"/>
        <end position="99"/>
    </location>
</feature>
<feature type="turn" evidence="46">
    <location>
        <begin position="100"/>
        <end position="102"/>
    </location>
</feature>
<feature type="helix" evidence="46">
    <location>
        <begin position="107"/>
        <end position="147"/>
    </location>
</feature>
<feature type="helix" evidence="46">
    <location>
        <begin position="149"/>
        <end position="154"/>
    </location>
</feature>
<feature type="turn" evidence="46">
    <location>
        <begin position="155"/>
        <end position="158"/>
    </location>
</feature>
<feature type="helix" evidence="46">
    <location>
        <begin position="159"/>
        <end position="164"/>
    </location>
</feature>
<feature type="turn" evidence="47">
    <location>
        <begin position="167"/>
        <end position="169"/>
    </location>
</feature>
<feature type="helix" evidence="47">
    <location>
        <begin position="170"/>
        <end position="187"/>
    </location>
</feature>
<name>BAX_HUMAN</name>
<keyword id="KW-0002">3D-structure</keyword>
<keyword id="KW-0007">Acetylation</keyword>
<keyword id="KW-0025">Alternative splicing</keyword>
<keyword id="KW-0053">Apoptosis</keyword>
<keyword id="KW-0963">Cytoplasm</keyword>
<keyword id="KW-0945">Host-virus interaction</keyword>
<keyword id="KW-1017">Isopeptide bond</keyword>
<keyword id="KW-0472">Membrane</keyword>
<keyword id="KW-0496">Mitochondrion</keyword>
<keyword id="KW-1000">Mitochondrion outer membrane</keyword>
<keyword id="KW-0539">Nucleus</keyword>
<keyword id="KW-1267">Proteomics identification</keyword>
<keyword id="KW-1185">Reference proteome</keyword>
<keyword id="KW-0812">Transmembrane</keyword>
<keyword id="KW-1133">Transmembrane helix</keyword>
<keyword id="KW-0043">Tumor suppressor</keyword>
<keyword id="KW-0832">Ubl conjugation</keyword>
<sequence length="192" mass="21184">MDGSGEQPRGGGPTSSEQIMKTGALLLQGFIQDRAGRMGGEAPELALDPVPQDASTKKLSECLKRIGDELDSNMELQRMIAAVDTDSPREVFFRVAADMFSDGNFNWGRVVALFYFASKLVLKALCTKVPELIRTIMGWTLDFLRERLLGWIQDQGGWDGLLSYFGTPTWQTVTIFVAGVLTASLTIWKKMG</sequence>
<dbReference type="EMBL" id="L22473">
    <property type="protein sequence ID" value="AAA03619.1"/>
    <property type="molecule type" value="mRNA"/>
</dbReference>
<dbReference type="EMBL" id="L22474">
    <property type="protein sequence ID" value="AAA03620.1"/>
    <property type="molecule type" value="mRNA"/>
</dbReference>
<dbReference type="EMBL" id="L22475">
    <property type="protein sequence ID" value="AAA03621.1"/>
    <property type="molecule type" value="mRNA"/>
</dbReference>
<dbReference type="EMBL" id="U19599">
    <property type="protein sequence ID" value="AAC50142.1"/>
    <property type="molecule type" value="mRNA"/>
</dbReference>
<dbReference type="EMBL" id="AF007826">
    <property type="protein sequence ID" value="AAD22706.1"/>
    <property type="molecule type" value="mRNA"/>
</dbReference>
<dbReference type="EMBL" id="AF247393">
    <property type="protein sequence ID" value="AAF71267.1"/>
    <property type="molecule type" value="mRNA"/>
</dbReference>
<dbReference type="EMBL" id="AJ417988">
    <property type="protein sequence ID" value="CAD10744.1"/>
    <property type="molecule type" value="mRNA"/>
</dbReference>
<dbReference type="EMBL" id="AF250190">
    <property type="protein sequence ID" value="AAF82094.1"/>
    <property type="molecule type" value="mRNA"/>
</dbReference>
<dbReference type="EMBL" id="AK291076">
    <property type="protein sequence ID" value="BAF83765.1"/>
    <property type="molecule type" value="mRNA"/>
</dbReference>
<dbReference type="EMBL" id="AY217036">
    <property type="protein sequence ID" value="AAO22992.1"/>
    <property type="molecule type" value="Genomic_DNA"/>
</dbReference>
<dbReference type="EMBL" id="CH471177">
    <property type="protein sequence ID" value="EAW52418.1"/>
    <property type="molecule type" value="Genomic_DNA"/>
</dbReference>
<dbReference type="EMBL" id="CH471177">
    <property type="protein sequence ID" value="EAW52417.1"/>
    <property type="molecule type" value="Genomic_DNA"/>
</dbReference>
<dbReference type="EMBL" id="BC014175">
    <property type="protein sequence ID" value="AAH14175.1"/>
    <property type="molecule type" value="mRNA"/>
</dbReference>
<dbReference type="CCDS" id="CCDS12742.1">
    <molecule id="Q07812-1"/>
</dbReference>
<dbReference type="CCDS" id="CCDS12743.1">
    <molecule id="Q07812-4"/>
</dbReference>
<dbReference type="CCDS" id="CCDS12744.1">
    <molecule id="Q07812-2"/>
</dbReference>
<dbReference type="CCDS" id="CCDS12745.2">
    <molecule id="Q07812-8"/>
</dbReference>
<dbReference type="PIR" id="A47538">
    <property type="entry name" value="A47538"/>
</dbReference>
<dbReference type="PIR" id="B47538">
    <property type="entry name" value="B47538"/>
</dbReference>
<dbReference type="PIR" id="C47538">
    <property type="entry name" value="C47538"/>
</dbReference>
<dbReference type="PIR" id="I38921">
    <property type="entry name" value="I38921"/>
</dbReference>
<dbReference type="PIR" id="JC7255">
    <property type="entry name" value="JC7255"/>
</dbReference>
<dbReference type="RefSeq" id="NP_001278357.1">
    <property type="nucleotide sequence ID" value="NM_001291428.1"/>
</dbReference>
<dbReference type="RefSeq" id="NP_001278360.1">
    <molecule id="Q07812-6"/>
    <property type="nucleotide sequence ID" value="NM_001291431.2"/>
</dbReference>
<dbReference type="RefSeq" id="NP_004315.1">
    <molecule id="Q07812-2"/>
    <property type="nucleotide sequence ID" value="NM_004324.4"/>
</dbReference>
<dbReference type="RefSeq" id="NP_620116.1">
    <molecule id="Q07812-1"/>
    <property type="nucleotide sequence ID" value="NM_138761.4"/>
</dbReference>
<dbReference type="RefSeq" id="NP_620118.1">
    <molecule id="Q07812-4"/>
    <property type="nucleotide sequence ID" value="NM_138763.4"/>
</dbReference>
<dbReference type="RefSeq" id="NP_620119.2">
    <molecule id="Q07812-8"/>
    <property type="nucleotide sequence ID" value="NM_138764.5"/>
</dbReference>
<dbReference type="RefSeq" id="XP_016882566.1">
    <property type="nucleotide sequence ID" value="XM_017027077.1"/>
</dbReference>
<dbReference type="PDB" id="1F16">
    <property type="method" value="NMR"/>
    <property type="chains" value="A=1-192"/>
</dbReference>
<dbReference type="PDB" id="2G5B">
    <property type="method" value="X-ray"/>
    <property type="resolution" value="2.30 A"/>
    <property type="chains" value="I/J/K/L=13-19"/>
</dbReference>
<dbReference type="PDB" id="2K7W">
    <property type="method" value="NMR"/>
    <property type="chains" value="A=1-192"/>
</dbReference>
<dbReference type="PDB" id="2LR1">
    <property type="method" value="NMR"/>
    <property type="chains" value="A=1-192"/>
</dbReference>
<dbReference type="PDB" id="3PK1">
    <property type="method" value="X-ray"/>
    <property type="resolution" value="2.49 A"/>
    <property type="chains" value="B/D=48-81"/>
</dbReference>
<dbReference type="PDB" id="3PL7">
    <property type="method" value="X-ray"/>
    <property type="resolution" value="2.61 A"/>
    <property type="chains" value="C=48-81"/>
</dbReference>
<dbReference type="PDB" id="4BD2">
    <property type="method" value="X-ray"/>
    <property type="resolution" value="2.21 A"/>
    <property type="chains" value="A=1-171"/>
</dbReference>
<dbReference type="PDB" id="4BD6">
    <property type="method" value="X-ray"/>
    <property type="resolution" value="2.49 A"/>
    <property type="chains" value="A=1-171, C=48-81"/>
</dbReference>
<dbReference type="PDB" id="4BD7">
    <property type="method" value="X-ray"/>
    <property type="resolution" value="2.80 A"/>
    <property type="chains" value="A/B/C/D=1-171"/>
</dbReference>
<dbReference type="PDB" id="4BD8">
    <property type="method" value="X-ray"/>
    <property type="resolution" value="2.22 A"/>
    <property type="chains" value="A/B/C/D=1-171"/>
</dbReference>
<dbReference type="PDB" id="4BDU">
    <property type="method" value="X-ray"/>
    <property type="resolution" value="3.00 A"/>
    <property type="chains" value="A/B/C/D=53-128"/>
</dbReference>
<dbReference type="PDB" id="4S0O">
    <property type="method" value="X-ray"/>
    <property type="resolution" value="1.90 A"/>
    <property type="chains" value="A/B=1-192"/>
</dbReference>
<dbReference type="PDB" id="4S0P">
    <property type="method" value="X-ray"/>
    <property type="resolution" value="3.25 A"/>
    <property type="chains" value="A/B=1-192"/>
</dbReference>
<dbReference type="PDB" id="4UF2">
    <property type="method" value="X-ray"/>
    <property type="resolution" value="3.00 A"/>
    <property type="chains" value="B=50-77"/>
</dbReference>
<dbReference type="PDB" id="4ZIE">
    <property type="method" value="X-ray"/>
    <property type="resolution" value="1.80 A"/>
    <property type="chains" value="A=1-166"/>
</dbReference>
<dbReference type="PDB" id="4ZIF">
    <property type="method" value="X-ray"/>
    <property type="resolution" value="2.40 A"/>
    <property type="chains" value="A=1-166"/>
</dbReference>
<dbReference type="PDB" id="4ZIG">
    <property type="method" value="X-ray"/>
    <property type="resolution" value="2.20 A"/>
    <property type="chains" value="A=1-166"/>
</dbReference>
<dbReference type="PDB" id="4ZIH">
    <property type="method" value="X-ray"/>
    <property type="resolution" value="2.50 A"/>
    <property type="chains" value="A=1-164"/>
</dbReference>
<dbReference type="PDB" id="4ZII">
    <property type="method" value="X-ray"/>
    <property type="resolution" value="2.19 A"/>
    <property type="chains" value="A=1-170"/>
</dbReference>
<dbReference type="PDB" id="5W5X">
    <property type="method" value="X-ray"/>
    <property type="resolution" value="2.50 A"/>
    <property type="chains" value="A=1-192"/>
</dbReference>
<dbReference type="PDB" id="5W5Z">
    <property type="method" value="X-ray"/>
    <property type="resolution" value="2.00 A"/>
    <property type="chains" value="A=32-192"/>
</dbReference>
<dbReference type="PDB" id="5W60">
    <property type="method" value="X-ray"/>
    <property type="resolution" value="1.80 A"/>
    <property type="chains" value="A=1-192"/>
</dbReference>
<dbReference type="PDB" id="5W61">
    <property type="method" value="X-ray"/>
    <property type="resolution" value="2.30 A"/>
    <property type="chains" value="A=1-192"/>
</dbReference>
<dbReference type="PDB" id="6EB6">
    <property type="method" value="X-ray"/>
    <property type="resolution" value="2.02 A"/>
    <property type="chains" value="A=1-192"/>
</dbReference>
<dbReference type="PDB" id="6L8V">
    <property type="method" value="NMR"/>
    <property type="chains" value="A/B=53-128"/>
</dbReference>
<dbReference type="PDB" id="6L95">
    <property type="method" value="NMR"/>
    <property type="chains" value="A/B=166-192"/>
</dbReference>
<dbReference type="PDB" id="6TRR">
    <property type="method" value="X-ray"/>
    <property type="resolution" value="2.12 A"/>
    <property type="chains" value="B=50-77"/>
</dbReference>
<dbReference type="PDB" id="6XY6">
    <property type="method" value="X-ray"/>
    <property type="resolution" value="2.91 A"/>
    <property type="chains" value="B/D/F/H/J/L/N/P=50-77"/>
</dbReference>
<dbReference type="PDB" id="7ADT">
    <property type="method" value="X-ray"/>
    <property type="resolution" value="2.21 A"/>
    <property type="chains" value="C/U=50-77"/>
</dbReference>
<dbReference type="PDB" id="8G1T">
    <property type="method" value="X-ray"/>
    <property type="resolution" value="2.09 A"/>
    <property type="chains" value="A/B/C/D/E/F/G/H=53-128"/>
</dbReference>
<dbReference type="PDB" id="8SPE">
    <property type="method" value="X-ray"/>
    <property type="resolution" value="2.30 A"/>
    <property type="chains" value="A/B/C/D/E/F/G/H/I/J/K/L/M/N/O/P/Q/R/S/T/U/V/W/X/Y/Z/a/b/c/d=53-128"/>
</dbReference>
<dbReference type="PDB" id="8SPF">
    <property type="method" value="X-ray"/>
    <property type="resolution" value="2.20 A"/>
    <property type="chains" value="A/B/C/D/E/F=53-128"/>
</dbReference>
<dbReference type="PDB" id="8SPZ">
    <property type="method" value="X-ray"/>
    <property type="resolution" value="2.40 A"/>
    <property type="chains" value="A/B/C/D=53-128"/>
</dbReference>
<dbReference type="PDB" id="8SRX">
    <property type="method" value="X-ray"/>
    <property type="resolution" value="2.09 A"/>
    <property type="chains" value="B/D=53-128"/>
</dbReference>
<dbReference type="PDB" id="8SRY">
    <property type="method" value="X-ray"/>
    <property type="resolution" value="2.40 A"/>
    <property type="chains" value="B/D=53-128"/>
</dbReference>
<dbReference type="PDB" id="8SVK">
    <property type="method" value="X-ray"/>
    <property type="resolution" value="2.25 A"/>
    <property type="chains" value="A/B/C/D=53-128"/>
</dbReference>
<dbReference type="PDBsum" id="1F16"/>
<dbReference type="PDBsum" id="2G5B"/>
<dbReference type="PDBsum" id="2K7W"/>
<dbReference type="PDBsum" id="2LR1"/>
<dbReference type="PDBsum" id="3PK1"/>
<dbReference type="PDBsum" id="3PL7"/>
<dbReference type="PDBsum" id="4BD2"/>
<dbReference type="PDBsum" id="4BD6"/>
<dbReference type="PDBsum" id="4BD7"/>
<dbReference type="PDBsum" id="4BD8"/>
<dbReference type="PDBsum" id="4BDU"/>
<dbReference type="PDBsum" id="4S0O"/>
<dbReference type="PDBsum" id="4S0P"/>
<dbReference type="PDBsum" id="4UF2"/>
<dbReference type="PDBsum" id="4ZIE"/>
<dbReference type="PDBsum" id="4ZIF"/>
<dbReference type="PDBsum" id="4ZIG"/>
<dbReference type="PDBsum" id="4ZIH"/>
<dbReference type="PDBsum" id="4ZII"/>
<dbReference type="PDBsum" id="5W5X"/>
<dbReference type="PDBsum" id="5W5Z"/>
<dbReference type="PDBsum" id="5W60"/>
<dbReference type="PDBsum" id="5W61"/>
<dbReference type="PDBsum" id="6EB6"/>
<dbReference type="PDBsum" id="6L8V"/>
<dbReference type="PDBsum" id="6L95"/>
<dbReference type="PDBsum" id="6TRR"/>
<dbReference type="PDBsum" id="6XY6"/>
<dbReference type="PDBsum" id="7ADT"/>
<dbReference type="PDBsum" id="8G1T"/>
<dbReference type="PDBsum" id="8SPE"/>
<dbReference type="PDBsum" id="8SPF"/>
<dbReference type="PDBsum" id="8SPZ"/>
<dbReference type="PDBsum" id="8SRX"/>
<dbReference type="PDBsum" id="8SRY"/>
<dbReference type="PDBsum" id="8SVK"/>
<dbReference type="BMRB" id="Q07812"/>
<dbReference type="SASBDB" id="Q07812"/>
<dbReference type="SMR" id="Q07812"/>
<dbReference type="BioGRID" id="107057">
    <property type="interactions" value="145"/>
</dbReference>
<dbReference type="ComplexPortal" id="CPX-1988">
    <property type="entry name" value="BAX oligomer"/>
</dbReference>
<dbReference type="CORUM" id="Q07812"/>
<dbReference type="DIP" id="DIP-232N"/>
<dbReference type="FunCoup" id="Q07812">
    <property type="interactions" value="1141"/>
</dbReference>
<dbReference type="IntAct" id="Q07812">
    <property type="interactions" value="81"/>
</dbReference>
<dbReference type="MINT" id="Q07812"/>
<dbReference type="STRING" id="9606.ENSP00000293288"/>
<dbReference type="BindingDB" id="Q07812"/>
<dbReference type="ChEMBL" id="CHEMBL5318"/>
<dbReference type="DrugBank" id="DB12756">
    <property type="generic name" value="TAK-901"/>
</dbReference>
<dbReference type="DrugBank" id="DB16447">
    <property type="generic name" value="Thymoquinone"/>
</dbReference>
<dbReference type="TCDB" id="1.A.21.1.2">
    <property type="family name" value="the bcl-2 (bcl-2) family"/>
</dbReference>
<dbReference type="GlyGen" id="Q07812">
    <property type="glycosylation" value="2 sites, 1 O-linked glycan (1 site)"/>
</dbReference>
<dbReference type="iPTMnet" id="Q07812"/>
<dbReference type="MetOSite" id="Q07812"/>
<dbReference type="PhosphoSitePlus" id="Q07812"/>
<dbReference type="SwissPalm" id="Q07812"/>
<dbReference type="BioMuta" id="BAX"/>
<dbReference type="DMDM" id="728945"/>
<dbReference type="jPOST" id="Q07812"/>
<dbReference type="MassIVE" id="Q07812"/>
<dbReference type="PaxDb" id="9606-ENSP00000293288"/>
<dbReference type="PeptideAtlas" id="Q07812"/>
<dbReference type="ProteomicsDB" id="58529">
    <molecule id="Q07812-1"/>
</dbReference>
<dbReference type="ProteomicsDB" id="58530">
    <molecule id="Q07812-2"/>
</dbReference>
<dbReference type="ProteomicsDB" id="58531">
    <molecule id="Q07812-3"/>
</dbReference>
<dbReference type="ProteomicsDB" id="58532">
    <molecule id="Q07812-4"/>
</dbReference>
<dbReference type="ProteomicsDB" id="58533">
    <molecule id="Q07812-5"/>
</dbReference>
<dbReference type="ProteomicsDB" id="58534">
    <molecule id="Q07812-6"/>
</dbReference>
<dbReference type="ProteomicsDB" id="58535">
    <molecule id="Q07812-7"/>
</dbReference>
<dbReference type="ProteomicsDB" id="58536">
    <molecule id="Q07812-8"/>
</dbReference>
<dbReference type="Pumba" id="Q07812"/>
<dbReference type="TopDownProteomics" id="Q07812-1">
    <molecule id="Q07812-1"/>
</dbReference>
<dbReference type="TopDownProteomics" id="Q07812-2">
    <molecule id="Q07812-2"/>
</dbReference>
<dbReference type="TopDownProteomics" id="Q07812-5">
    <molecule id="Q07812-5"/>
</dbReference>
<dbReference type="TopDownProteomics" id="Q07812-6">
    <molecule id="Q07812-6"/>
</dbReference>
<dbReference type="TopDownProteomics" id="Q07812-8">
    <molecule id="Q07812-8"/>
</dbReference>
<dbReference type="ABCD" id="Q07812">
    <property type="antibodies" value="22 sequenced antibodies"/>
</dbReference>
<dbReference type="Antibodypedia" id="3777">
    <property type="antibodies" value="2169 antibodies from 52 providers"/>
</dbReference>
<dbReference type="CPTC" id="Q07812">
    <property type="antibodies" value="1 antibody"/>
</dbReference>
<dbReference type="DNASU" id="581"/>
<dbReference type="Ensembl" id="ENST00000293288.12">
    <molecule id="Q07812-2"/>
    <property type="protein sequence ID" value="ENSP00000293288.8"/>
    <property type="gene ID" value="ENSG00000087088.21"/>
</dbReference>
<dbReference type="Ensembl" id="ENST00000345358.12">
    <molecule id="Q07812-1"/>
    <property type="protein sequence ID" value="ENSP00000263262.9"/>
    <property type="gene ID" value="ENSG00000087088.21"/>
</dbReference>
<dbReference type="Ensembl" id="ENST00000354470.7">
    <molecule id="Q07812-4"/>
    <property type="protein sequence ID" value="ENSP00000346461.3"/>
    <property type="gene ID" value="ENSG00000087088.21"/>
</dbReference>
<dbReference type="Ensembl" id="ENST00000356483.8">
    <molecule id="Q07812-5"/>
    <property type="protein sequence ID" value="ENSP00000348871.4"/>
    <property type="gene ID" value="ENSG00000087088.21"/>
</dbReference>
<dbReference type="Ensembl" id="ENST00000415969.6">
    <molecule id="Q07812-8"/>
    <property type="protein sequence ID" value="ENSP00000389971.2"/>
    <property type="gene ID" value="ENSG00000087088.21"/>
</dbReference>
<dbReference type="Ensembl" id="ENST00000515540.5">
    <molecule id="Q07812-3"/>
    <property type="protein sequence ID" value="ENSP00000426328.1"/>
    <property type="gene ID" value="ENSG00000087088.21"/>
</dbReference>
<dbReference type="GeneID" id="581"/>
<dbReference type="KEGG" id="hsa:581"/>
<dbReference type="MANE-Select" id="ENST00000345358.12">
    <property type="protein sequence ID" value="ENSP00000263262.9"/>
    <property type="RefSeq nucleotide sequence ID" value="NM_138761.4"/>
    <property type="RefSeq protein sequence ID" value="NP_620116.1"/>
</dbReference>
<dbReference type="UCSC" id="uc002plf.2">
    <molecule id="Q07812-1"/>
    <property type="organism name" value="human"/>
</dbReference>
<dbReference type="AGR" id="HGNC:959"/>
<dbReference type="CTD" id="581"/>
<dbReference type="DisGeNET" id="581"/>
<dbReference type="GeneCards" id="BAX"/>
<dbReference type="HGNC" id="HGNC:959">
    <property type="gene designation" value="BAX"/>
</dbReference>
<dbReference type="HPA" id="ENSG00000087088">
    <property type="expression patterns" value="Low tissue specificity"/>
</dbReference>
<dbReference type="MalaCards" id="BAX"/>
<dbReference type="MIM" id="600040">
    <property type="type" value="gene"/>
</dbReference>
<dbReference type="neXtProt" id="NX_Q07812"/>
<dbReference type="OpenTargets" id="ENSG00000087088"/>
<dbReference type="PharmGKB" id="PA25269"/>
<dbReference type="VEuPathDB" id="HostDB:ENSG00000087088"/>
<dbReference type="eggNOG" id="KOG4728">
    <property type="taxonomic scope" value="Eukaryota"/>
</dbReference>
<dbReference type="GeneTree" id="ENSGT01130000278292"/>
<dbReference type="HOGENOM" id="CLU_3279262_0_0_1"/>
<dbReference type="InParanoid" id="Q07812"/>
<dbReference type="OMA" id="QCCGDSE"/>
<dbReference type="OrthoDB" id="6080198at2759"/>
<dbReference type="PAN-GO" id="Q07812">
    <property type="GO annotations" value="9 GO annotations based on evolutionary models"/>
</dbReference>
<dbReference type="PhylomeDB" id="Q07812"/>
<dbReference type="TreeFam" id="TF315834"/>
<dbReference type="PathwayCommons" id="Q07812"/>
<dbReference type="Reactome" id="R-HSA-111457">
    <property type="pathway name" value="Release of apoptotic factors from the mitochondria"/>
</dbReference>
<dbReference type="Reactome" id="R-HSA-114294">
    <property type="pathway name" value="Activation, translocation and oligomerization of BAX"/>
</dbReference>
<dbReference type="Reactome" id="R-HSA-5620971">
    <property type="pathway name" value="Pyroptosis"/>
</dbReference>
<dbReference type="Reactome" id="R-HSA-6803204">
    <property type="pathway name" value="TP53 Regulates Transcription of Genes Involved in Cytochrome C Release"/>
</dbReference>
<dbReference type="Reactome" id="R-HSA-6804114">
    <property type="pathway name" value="TP53 Regulates Transcription of Genes Involved in G2 Cell Cycle Arrest"/>
</dbReference>
<dbReference type="Reactome" id="R-HSA-8878166">
    <property type="pathway name" value="Transcriptional regulation by RUNX2"/>
</dbReference>
<dbReference type="Reactome" id="R-HSA-9603505">
    <property type="pathway name" value="NTRK3 as a dependence receptor"/>
</dbReference>
<dbReference type="SignaLink" id="Q07812"/>
<dbReference type="SIGNOR" id="Q07812"/>
<dbReference type="BioGRID-ORCS" id="581">
    <property type="hits" value="32 hits in 1176 CRISPR screens"/>
</dbReference>
<dbReference type="ChiTaRS" id="BAX">
    <property type="organism name" value="human"/>
</dbReference>
<dbReference type="EvolutionaryTrace" id="Q07812"/>
<dbReference type="GeneWiki" id="Bcl-2-associated_X_protein"/>
<dbReference type="GenomeRNAi" id="581"/>
<dbReference type="Pharos" id="Q07812">
    <property type="development level" value="Tchem"/>
</dbReference>
<dbReference type="PRO" id="PR:Q07812"/>
<dbReference type="Proteomes" id="UP000005640">
    <property type="component" value="Chromosome 19"/>
</dbReference>
<dbReference type="RNAct" id="Q07812">
    <property type="molecule type" value="protein"/>
</dbReference>
<dbReference type="Bgee" id="ENSG00000087088">
    <property type="expression patterns" value="Expressed in mucosa of transverse colon and 168 other cell types or tissues"/>
</dbReference>
<dbReference type="ExpressionAtlas" id="Q07812">
    <property type="expression patterns" value="baseline and differential"/>
</dbReference>
<dbReference type="GO" id="GO:0097145">
    <property type="term" value="C:BAK complex"/>
    <property type="evidence" value="ECO:0000314"/>
    <property type="project" value="ARUK-UCL"/>
</dbReference>
<dbReference type="GO" id="GO:0097144">
    <property type="term" value="C:BAX complex"/>
    <property type="evidence" value="ECO:0000314"/>
    <property type="project" value="UniProtKB"/>
</dbReference>
<dbReference type="GO" id="GO:0097136">
    <property type="term" value="C:Bcl-2 family protein complex"/>
    <property type="evidence" value="ECO:0000314"/>
    <property type="project" value="UniProtKB"/>
</dbReference>
<dbReference type="GO" id="GO:0005737">
    <property type="term" value="C:cytoplasm"/>
    <property type="evidence" value="ECO:0000314"/>
    <property type="project" value="UniProtKB"/>
</dbReference>
<dbReference type="GO" id="GO:0005829">
    <property type="term" value="C:cytosol"/>
    <property type="evidence" value="ECO:0000314"/>
    <property type="project" value="UniProtKB"/>
</dbReference>
<dbReference type="GO" id="GO:0005783">
    <property type="term" value="C:endoplasmic reticulum"/>
    <property type="evidence" value="ECO:0000314"/>
    <property type="project" value="HGNC-UCL"/>
</dbReference>
<dbReference type="GO" id="GO:0005789">
    <property type="term" value="C:endoplasmic reticulum membrane"/>
    <property type="evidence" value="ECO:0000314"/>
    <property type="project" value="HGNC-UCL"/>
</dbReference>
<dbReference type="GO" id="GO:0070062">
    <property type="term" value="C:extracellular exosome"/>
    <property type="evidence" value="ECO:0007005"/>
    <property type="project" value="UniProtKB"/>
</dbReference>
<dbReference type="GO" id="GO:0016020">
    <property type="term" value="C:membrane"/>
    <property type="evidence" value="ECO:0007005"/>
    <property type="project" value="UniProtKB"/>
</dbReference>
<dbReference type="GO" id="GO:0005741">
    <property type="term" value="C:mitochondrial outer membrane"/>
    <property type="evidence" value="ECO:0000314"/>
    <property type="project" value="UniProtKB"/>
</dbReference>
<dbReference type="GO" id="GO:0005757">
    <property type="term" value="C:mitochondrial permeability transition pore complex"/>
    <property type="evidence" value="ECO:0000314"/>
    <property type="project" value="HGNC-UCL"/>
</dbReference>
<dbReference type="GO" id="GO:0005739">
    <property type="term" value="C:mitochondrion"/>
    <property type="evidence" value="ECO:0000314"/>
    <property type="project" value="UniProtKB"/>
</dbReference>
<dbReference type="GO" id="GO:0005635">
    <property type="term" value="C:nuclear envelope"/>
    <property type="evidence" value="ECO:0000314"/>
    <property type="project" value="AgBase"/>
</dbReference>
<dbReference type="GO" id="GO:0005634">
    <property type="term" value="C:nucleus"/>
    <property type="evidence" value="ECO:0000314"/>
    <property type="project" value="AgBase"/>
</dbReference>
<dbReference type="GO" id="GO:0046930">
    <property type="term" value="C:pore complex"/>
    <property type="evidence" value="ECO:0000314"/>
    <property type="project" value="BHF-UCL"/>
</dbReference>
<dbReference type="GO" id="GO:0051434">
    <property type="term" value="F:BH3 domain binding"/>
    <property type="evidence" value="ECO:0000314"/>
    <property type="project" value="UniProtKB"/>
</dbReference>
<dbReference type="GO" id="GO:0015267">
    <property type="term" value="F:channel activity"/>
    <property type="evidence" value="ECO:0000314"/>
    <property type="project" value="BHF-UCL"/>
</dbReference>
<dbReference type="GO" id="GO:0030544">
    <property type="term" value="F:Hsp70 protein binding"/>
    <property type="evidence" value="ECO:0007669"/>
    <property type="project" value="Ensembl"/>
</dbReference>
<dbReference type="GO" id="GO:0042802">
    <property type="term" value="F:identical protein binding"/>
    <property type="evidence" value="ECO:0000353"/>
    <property type="project" value="UniProtKB"/>
</dbReference>
<dbReference type="GO" id="GO:0008289">
    <property type="term" value="F:lipid binding"/>
    <property type="evidence" value="ECO:0000314"/>
    <property type="project" value="HGNC-UCL"/>
</dbReference>
<dbReference type="GO" id="GO:0046982">
    <property type="term" value="F:protein heterodimerization activity"/>
    <property type="evidence" value="ECO:0000353"/>
    <property type="project" value="HGNC-UCL"/>
</dbReference>
<dbReference type="GO" id="GO:0042803">
    <property type="term" value="F:protein homodimerization activity"/>
    <property type="evidence" value="ECO:0000314"/>
    <property type="project" value="HGNC-UCL"/>
</dbReference>
<dbReference type="GO" id="GO:0008637">
    <property type="term" value="P:apoptotic mitochondrial changes"/>
    <property type="evidence" value="ECO:0000314"/>
    <property type="project" value="HGNC-UCL"/>
</dbReference>
<dbReference type="GO" id="GO:0006915">
    <property type="term" value="P:apoptotic process"/>
    <property type="evidence" value="ECO:0000314"/>
    <property type="project" value="DIBU"/>
</dbReference>
<dbReference type="GO" id="GO:1902262">
    <property type="term" value="P:apoptotic process involved in blood vessel morphogenesis"/>
    <property type="evidence" value="ECO:0007669"/>
    <property type="project" value="Ensembl"/>
</dbReference>
<dbReference type="GO" id="GO:1902263">
    <property type="term" value="P:apoptotic process involved in embryonic digit morphogenesis"/>
    <property type="evidence" value="ECO:0007669"/>
    <property type="project" value="Ensembl"/>
</dbReference>
<dbReference type="GO" id="GO:0060057">
    <property type="term" value="P:apoptotic process involved in mammary gland involution"/>
    <property type="evidence" value="ECO:0007669"/>
    <property type="project" value="Ensembl"/>
</dbReference>
<dbReference type="GO" id="GO:0097190">
    <property type="term" value="P:apoptotic signaling pathway"/>
    <property type="evidence" value="ECO:0000314"/>
    <property type="project" value="HGNC-UCL"/>
</dbReference>
<dbReference type="GO" id="GO:0001783">
    <property type="term" value="P:B cell apoptotic process"/>
    <property type="evidence" value="ECO:0000314"/>
    <property type="project" value="HGNC-UCL"/>
</dbReference>
<dbReference type="GO" id="GO:0001782">
    <property type="term" value="P:B cell homeostasis"/>
    <property type="evidence" value="ECO:0007669"/>
    <property type="project" value="Ensembl"/>
</dbReference>
<dbReference type="GO" id="GO:0002358">
    <property type="term" value="P:B cell homeostatic proliferation"/>
    <property type="evidence" value="ECO:0007669"/>
    <property type="project" value="Ensembl"/>
</dbReference>
<dbReference type="GO" id="GO:0002352">
    <property type="term" value="P:B cell negative selection"/>
    <property type="evidence" value="ECO:0007669"/>
    <property type="project" value="Ensembl"/>
</dbReference>
<dbReference type="GO" id="GO:1990117">
    <property type="term" value="P:B cell receptor apoptotic signaling pathway"/>
    <property type="evidence" value="ECO:0000314"/>
    <property type="project" value="BHF-UCL"/>
</dbReference>
<dbReference type="GO" id="GO:0001974">
    <property type="term" value="P:blood vessel remodeling"/>
    <property type="evidence" value="ECO:0007669"/>
    <property type="project" value="Ensembl"/>
</dbReference>
<dbReference type="GO" id="GO:0060402">
    <property type="term" value="P:calcium ion transport into cytosol"/>
    <property type="evidence" value="ECO:0007669"/>
    <property type="project" value="Ensembl"/>
</dbReference>
<dbReference type="GO" id="GO:0034620">
    <property type="term" value="P:cellular response to unfolded protein"/>
    <property type="evidence" value="ECO:0000304"/>
    <property type="project" value="ParkinsonsUK-UCL"/>
</dbReference>
<dbReference type="GO" id="GO:0034644">
    <property type="term" value="P:cellular response to UV"/>
    <property type="evidence" value="ECO:0007669"/>
    <property type="project" value="Ensembl"/>
</dbReference>
<dbReference type="GO" id="GO:0098586">
    <property type="term" value="P:cellular response to virus"/>
    <property type="evidence" value="ECO:0000314"/>
    <property type="project" value="UniProtKB"/>
</dbReference>
<dbReference type="GO" id="GO:0021987">
    <property type="term" value="P:cerebral cortex development"/>
    <property type="evidence" value="ECO:0007669"/>
    <property type="project" value="Ensembl"/>
</dbReference>
<dbReference type="GO" id="GO:0045136">
    <property type="term" value="P:development of secondary sexual characteristics"/>
    <property type="evidence" value="ECO:0007669"/>
    <property type="project" value="Ensembl"/>
</dbReference>
<dbReference type="GO" id="GO:0035234">
    <property type="term" value="P:ectopic germ cell programmed cell death"/>
    <property type="evidence" value="ECO:0007669"/>
    <property type="project" value="Ensembl"/>
</dbReference>
<dbReference type="GO" id="GO:0032469">
    <property type="term" value="P:endoplasmic reticulum calcium ion homeostasis"/>
    <property type="evidence" value="ECO:0000304"/>
    <property type="project" value="UniProtKB"/>
</dbReference>
<dbReference type="GO" id="GO:1904019">
    <property type="term" value="P:epithelial cell apoptotic process"/>
    <property type="evidence" value="ECO:0007669"/>
    <property type="project" value="Ensembl"/>
</dbReference>
<dbReference type="GO" id="GO:0010248">
    <property type="term" value="P:establishment or maintenance of transmembrane electrochemical gradient"/>
    <property type="evidence" value="ECO:0000314"/>
    <property type="project" value="HGNC-UCL"/>
</dbReference>
<dbReference type="GO" id="GO:0097194">
    <property type="term" value="P:execution phase of apoptosis"/>
    <property type="evidence" value="ECO:0000315"/>
    <property type="project" value="HGNC-UCL"/>
</dbReference>
<dbReference type="GO" id="GO:0097191">
    <property type="term" value="P:extrinsic apoptotic signaling pathway"/>
    <property type="evidence" value="ECO:0000314"/>
    <property type="project" value="BHF-UCL"/>
</dbReference>
<dbReference type="GO" id="GO:0097192">
    <property type="term" value="P:extrinsic apoptotic signaling pathway in absence of ligand"/>
    <property type="evidence" value="ECO:0000318"/>
    <property type="project" value="GO_Central"/>
</dbReference>
<dbReference type="GO" id="GO:0008625">
    <property type="term" value="P:extrinsic apoptotic signaling pathway via death domain receptors"/>
    <property type="evidence" value="ECO:0000305"/>
    <property type="project" value="BHF-UCL"/>
</dbReference>
<dbReference type="GO" id="GO:0009566">
    <property type="term" value="P:fertilization"/>
    <property type="evidence" value="ECO:0007669"/>
    <property type="project" value="Ensembl"/>
</dbReference>
<dbReference type="GO" id="GO:0007281">
    <property type="term" value="P:germ cell development"/>
    <property type="evidence" value="ECO:0007669"/>
    <property type="project" value="Ensembl"/>
</dbReference>
<dbReference type="GO" id="GO:0006687">
    <property type="term" value="P:glycosphingolipid metabolic process"/>
    <property type="evidence" value="ECO:0007669"/>
    <property type="project" value="Ensembl"/>
</dbReference>
<dbReference type="GO" id="GO:0048873">
    <property type="term" value="P:homeostasis of number of cells within a tissue"/>
    <property type="evidence" value="ECO:0007669"/>
    <property type="project" value="Ensembl"/>
</dbReference>
<dbReference type="GO" id="GO:0021854">
    <property type="term" value="P:hypothalamus development"/>
    <property type="evidence" value="ECO:0007669"/>
    <property type="project" value="Ensembl"/>
</dbReference>
<dbReference type="GO" id="GO:0097193">
    <property type="term" value="P:intrinsic apoptotic signaling pathway"/>
    <property type="evidence" value="ECO:0000314"/>
    <property type="project" value="HGNC-UCL"/>
</dbReference>
<dbReference type="GO" id="GO:0072332">
    <property type="term" value="P:intrinsic apoptotic signaling pathway by p53 class mediator"/>
    <property type="evidence" value="ECO:0007669"/>
    <property type="project" value="Ensembl"/>
</dbReference>
<dbReference type="GO" id="GO:0008630">
    <property type="term" value="P:intrinsic apoptotic signaling pathway in response to DNA damage"/>
    <property type="evidence" value="ECO:0000314"/>
    <property type="project" value="HGNC-UCL"/>
</dbReference>
<dbReference type="GO" id="GO:0070059">
    <property type="term" value="P:intrinsic apoptotic signaling pathway in response to endoplasmic reticulum stress"/>
    <property type="evidence" value="ECO:0000304"/>
    <property type="project" value="ParkinsonsUK-UCL"/>
</dbReference>
<dbReference type="GO" id="GO:0001822">
    <property type="term" value="P:kidney development"/>
    <property type="evidence" value="ECO:0007669"/>
    <property type="project" value="Ensembl"/>
</dbReference>
<dbReference type="GO" id="GO:0043653">
    <property type="term" value="P:mitochondrial fragmentation involved in apoptotic process"/>
    <property type="evidence" value="ECO:0000314"/>
    <property type="project" value="HGNC-UCL"/>
</dbReference>
<dbReference type="GO" id="GO:0008053">
    <property type="term" value="P:mitochondrial fusion"/>
    <property type="evidence" value="ECO:0000314"/>
    <property type="project" value="HGNC-UCL"/>
</dbReference>
<dbReference type="GO" id="GO:0097049">
    <property type="term" value="P:motor neuron apoptotic process"/>
    <property type="evidence" value="ECO:0007669"/>
    <property type="project" value="Ensembl"/>
</dbReference>
<dbReference type="GO" id="GO:0002262">
    <property type="term" value="P:myeloid cell homeostasis"/>
    <property type="evidence" value="ECO:0007669"/>
    <property type="project" value="Ensembl"/>
</dbReference>
<dbReference type="GO" id="GO:2001234">
    <property type="term" value="P:negative regulation of apoptotic signaling pathway"/>
    <property type="evidence" value="ECO:0007669"/>
    <property type="project" value="Ensembl"/>
</dbReference>
<dbReference type="GO" id="GO:0032471">
    <property type="term" value="P:negative regulation of endoplasmic reticulum calcium ion concentration"/>
    <property type="evidence" value="ECO:0007669"/>
    <property type="project" value="Ensembl"/>
</dbReference>
<dbReference type="GO" id="GO:0048147">
    <property type="term" value="P:negative regulation of fibroblast proliferation"/>
    <property type="evidence" value="ECO:0007669"/>
    <property type="project" value="Ensembl"/>
</dbReference>
<dbReference type="GO" id="GO:0010917">
    <property type="term" value="P:negative regulation of mitochondrial membrane potential"/>
    <property type="evidence" value="ECO:0000314"/>
    <property type="project" value="UniProtKB"/>
</dbReference>
<dbReference type="GO" id="GO:0043524">
    <property type="term" value="P:negative regulation of neuron apoptotic process"/>
    <property type="evidence" value="ECO:0007669"/>
    <property type="project" value="Ensembl"/>
</dbReference>
<dbReference type="GO" id="GO:0032091">
    <property type="term" value="P:negative regulation of protein binding"/>
    <property type="evidence" value="ECO:0000314"/>
    <property type="project" value="UniProtKB"/>
</dbReference>
<dbReference type="GO" id="GO:0001764">
    <property type="term" value="P:neuron migration"/>
    <property type="evidence" value="ECO:0007669"/>
    <property type="project" value="Ensembl"/>
</dbReference>
<dbReference type="GO" id="GO:0042475">
    <property type="term" value="P:odontogenesis of dentin-containing tooth"/>
    <property type="evidence" value="ECO:0007669"/>
    <property type="project" value="Ensembl"/>
</dbReference>
<dbReference type="GO" id="GO:0001541">
    <property type="term" value="P:ovarian follicle development"/>
    <property type="evidence" value="ECO:0007669"/>
    <property type="project" value="Ensembl"/>
</dbReference>
<dbReference type="GO" id="GO:1902512">
    <property type="term" value="P:positive regulation of apoptotic DNA fragmentation"/>
    <property type="evidence" value="ECO:0000315"/>
    <property type="project" value="BHF-UCL"/>
</dbReference>
<dbReference type="GO" id="GO:0043065">
    <property type="term" value="P:positive regulation of apoptotic process"/>
    <property type="evidence" value="ECO:0000314"/>
    <property type="project" value="UniProtKB"/>
</dbReference>
<dbReference type="GO" id="GO:0060058">
    <property type="term" value="P:positive regulation of apoptotic process involved in mammary gland involution"/>
    <property type="evidence" value="ECO:0007669"/>
    <property type="project" value="Ensembl"/>
</dbReference>
<dbReference type="GO" id="GO:0002904">
    <property type="term" value="P:positive regulation of B cell apoptotic process"/>
    <property type="evidence" value="ECO:0007669"/>
    <property type="project" value="Ensembl"/>
</dbReference>
<dbReference type="GO" id="GO:0010524">
    <property type="term" value="P:positive regulation of calcium ion transport into cytosol"/>
    <property type="evidence" value="ECO:0007669"/>
    <property type="project" value="Ensembl"/>
</dbReference>
<dbReference type="GO" id="GO:0048087">
    <property type="term" value="P:positive regulation of developmental pigmentation"/>
    <property type="evidence" value="ECO:0007669"/>
    <property type="project" value="Ensembl"/>
</dbReference>
<dbReference type="GO" id="GO:1904037">
    <property type="term" value="P:positive regulation of epithelial cell apoptotic process"/>
    <property type="evidence" value="ECO:0007669"/>
    <property type="project" value="Ensembl"/>
</dbReference>
<dbReference type="GO" id="GO:2001244">
    <property type="term" value="P:positive regulation of intrinsic apoptotic signaling pathway"/>
    <property type="evidence" value="ECO:0000315"/>
    <property type="project" value="UniProtKB"/>
</dbReference>
<dbReference type="GO" id="GO:1903896">
    <property type="term" value="P:positive regulation of IRE1-mediated unfolded protein response"/>
    <property type="evidence" value="ECO:0000304"/>
    <property type="project" value="ParkinsonsUK-UCL"/>
</dbReference>
<dbReference type="GO" id="GO:1902110">
    <property type="term" value="P:positive regulation of mitochondrial membrane permeability involved in apoptotic process"/>
    <property type="evidence" value="ECO:0007669"/>
    <property type="project" value="Ensembl"/>
</dbReference>
<dbReference type="GO" id="GO:2000673">
    <property type="term" value="P:positive regulation of motor neuron apoptotic process"/>
    <property type="evidence" value="ECO:0007669"/>
    <property type="project" value="Ensembl"/>
</dbReference>
<dbReference type="GO" id="GO:0043525">
    <property type="term" value="P:positive regulation of neuron apoptotic process"/>
    <property type="evidence" value="ECO:0000314"/>
    <property type="project" value="HGNC-UCL"/>
</dbReference>
<dbReference type="GO" id="GO:0031334">
    <property type="term" value="P:positive regulation of protein-containing complex assembly"/>
    <property type="evidence" value="ECO:0000314"/>
    <property type="project" value="UniProtKB"/>
</dbReference>
<dbReference type="GO" id="GO:0090200">
    <property type="term" value="P:positive regulation of release of cytochrome c from mitochondria"/>
    <property type="evidence" value="ECO:0000314"/>
    <property type="project" value="UniProtKB"/>
</dbReference>
<dbReference type="GO" id="GO:0051281">
    <property type="term" value="P:positive regulation of release of sequestered calcium ion into cytosol"/>
    <property type="evidence" value="ECO:0007669"/>
    <property type="project" value="Ensembl"/>
</dbReference>
<dbReference type="GO" id="GO:2000243">
    <property type="term" value="P:positive regulation of reproductive process"/>
    <property type="evidence" value="ECO:0007669"/>
    <property type="project" value="Ensembl"/>
</dbReference>
<dbReference type="GO" id="GO:0048597">
    <property type="term" value="P:post-embryonic camera-type eye morphogenesis"/>
    <property type="evidence" value="ECO:0007669"/>
    <property type="project" value="Ensembl"/>
</dbReference>
<dbReference type="GO" id="GO:0051204">
    <property type="term" value="P:protein insertion into mitochondrial membrane"/>
    <property type="evidence" value="ECO:0007669"/>
    <property type="project" value="Ensembl"/>
</dbReference>
<dbReference type="GO" id="GO:0042981">
    <property type="term" value="P:regulation of apoptotic process"/>
    <property type="evidence" value="ECO:0000314"/>
    <property type="project" value="UniProtKB"/>
</dbReference>
<dbReference type="GO" id="GO:0051726">
    <property type="term" value="P:regulation of cell cycle"/>
    <property type="evidence" value="ECO:0007669"/>
    <property type="project" value="Ensembl"/>
</dbReference>
<dbReference type="GO" id="GO:0033599">
    <property type="term" value="P:regulation of mammary gland epithelial cell proliferation"/>
    <property type="evidence" value="ECO:0007669"/>
    <property type="project" value="Ensembl"/>
</dbReference>
<dbReference type="GO" id="GO:1902445">
    <property type="term" value="P:regulation of mitochondrial membrane permeability involved in programmed necrotic cell death"/>
    <property type="evidence" value="ECO:0007669"/>
    <property type="project" value="Ensembl"/>
</dbReference>
<dbReference type="GO" id="GO:0051881">
    <property type="term" value="P:regulation of mitochondrial membrane potential"/>
    <property type="evidence" value="ECO:0000314"/>
    <property type="project" value="HGNC-UCL"/>
</dbReference>
<dbReference type="GO" id="GO:0006808">
    <property type="term" value="P:regulation of nitrogen utilization"/>
    <property type="evidence" value="ECO:0007669"/>
    <property type="project" value="Ensembl"/>
</dbReference>
<dbReference type="GO" id="GO:0001836">
    <property type="term" value="P:release of cytochrome c from mitochondria"/>
    <property type="evidence" value="ECO:0000314"/>
    <property type="project" value="UniProtKB"/>
</dbReference>
<dbReference type="GO" id="GO:0032976">
    <property type="term" value="P:release of matrix enzymes from mitochondria"/>
    <property type="evidence" value="ECO:0000314"/>
    <property type="project" value="HGNC-UCL"/>
</dbReference>
<dbReference type="GO" id="GO:0051209">
    <property type="term" value="P:release of sequestered calcium ion into cytosol"/>
    <property type="evidence" value="ECO:0007669"/>
    <property type="project" value="Ensembl"/>
</dbReference>
<dbReference type="GO" id="GO:0048678">
    <property type="term" value="P:response to axon injury"/>
    <property type="evidence" value="ECO:0007669"/>
    <property type="project" value="Ensembl"/>
</dbReference>
<dbReference type="GO" id="GO:0010332">
    <property type="term" value="P:response to gamma radiation"/>
    <property type="evidence" value="ECO:0007669"/>
    <property type="project" value="Ensembl"/>
</dbReference>
<dbReference type="GO" id="GO:0009651">
    <property type="term" value="P:response to salt stress"/>
    <property type="evidence" value="ECO:0007669"/>
    <property type="project" value="Ensembl"/>
</dbReference>
<dbReference type="GO" id="GO:0009636">
    <property type="term" value="P:response to toxic substance"/>
    <property type="evidence" value="ECO:0000314"/>
    <property type="project" value="HGNC-UCL"/>
</dbReference>
<dbReference type="GO" id="GO:0060041">
    <property type="term" value="P:retina development in camera-type eye"/>
    <property type="evidence" value="ECO:0007669"/>
    <property type="project" value="Ensembl"/>
</dbReference>
<dbReference type="GO" id="GO:0046666">
    <property type="term" value="P:retinal cell programmed cell death"/>
    <property type="evidence" value="ECO:0007669"/>
    <property type="project" value="Ensembl"/>
</dbReference>
<dbReference type="GO" id="GO:0060011">
    <property type="term" value="P:Sertoli cell proliferation"/>
    <property type="evidence" value="ECO:0007669"/>
    <property type="project" value="Ensembl"/>
</dbReference>
<dbReference type="GO" id="GO:0048515">
    <property type="term" value="P:spermatid differentiation"/>
    <property type="evidence" value="ECO:0007669"/>
    <property type="project" value="Ensembl"/>
</dbReference>
<dbReference type="GO" id="GO:0097435">
    <property type="term" value="P:supramolecular fiber organization"/>
    <property type="evidence" value="ECO:0000314"/>
    <property type="project" value="UniProtKB"/>
</dbReference>
<dbReference type="GO" id="GO:0001777">
    <property type="term" value="P:T cell homeostatic proliferation"/>
    <property type="evidence" value="ECO:0007669"/>
    <property type="project" value="Ensembl"/>
</dbReference>
<dbReference type="GO" id="GO:0070242">
    <property type="term" value="P:thymocyte apoptotic process"/>
    <property type="evidence" value="ECO:0007669"/>
    <property type="project" value="Ensembl"/>
</dbReference>
<dbReference type="GO" id="GO:0060068">
    <property type="term" value="P:vagina development"/>
    <property type="evidence" value="ECO:0007669"/>
    <property type="project" value="Ensembl"/>
</dbReference>
<dbReference type="CDD" id="cd06845">
    <property type="entry name" value="Bcl-2_like"/>
    <property type="match status" value="1"/>
</dbReference>
<dbReference type="DisProt" id="DP02540"/>
<dbReference type="FunFam" id="1.10.437.10:FF:000004">
    <property type="entry name" value="apoptosis regulator BAX isoform X2"/>
    <property type="match status" value="1"/>
</dbReference>
<dbReference type="Gene3D" id="1.10.437.10">
    <property type="entry name" value="Blc2-like"/>
    <property type="match status" value="1"/>
</dbReference>
<dbReference type="InterPro" id="IPR036834">
    <property type="entry name" value="Bcl-2-like_sf"/>
</dbReference>
<dbReference type="InterPro" id="IPR046371">
    <property type="entry name" value="Bcl-2_BH1-3"/>
</dbReference>
<dbReference type="InterPro" id="IPR026298">
    <property type="entry name" value="Bcl-2_fam"/>
</dbReference>
<dbReference type="InterPro" id="IPR002475">
    <property type="entry name" value="Bcl2-like"/>
</dbReference>
<dbReference type="InterPro" id="IPR020717">
    <property type="entry name" value="Bcl2_BH1_motif_CS"/>
</dbReference>
<dbReference type="InterPro" id="IPR020726">
    <property type="entry name" value="Bcl2_BH2_motif_CS"/>
</dbReference>
<dbReference type="InterPro" id="IPR020728">
    <property type="entry name" value="Bcl2_BH3_motif_CS"/>
</dbReference>
<dbReference type="PANTHER" id="PTHR11256:SF42">
    <property type="entry name" value="APOPTOSIS REGULATOR BAX"/>
    <property type="match status" value="1"/>
</dbReference>
<dbReference type="PANTHER" id="PTHR11256">
    <property type="entry name" value="BCL-2 RELATED"/>
    <property type="match status" value="1"/>
</dbReference>
<dbReference type="Pfam" id="PF00452">
    <property type="entry name" value="Bcl-2"/>
    <property type="match status" value="1"/>
</dbReference>
<dbReference type="PRINTS" id="PR01862">
    <property type="entry name" value="BCL2FAMILY"/>
</dbReference>
<dbReference type="SMART" id="SM00337">
    <property type="entry name" value="BCL"/>
    <property type="match status" value="1"/>
</dbReference>
<dbReference type="SUPFAM" id="SSF56854">
    <property type="entry name" value="Bcl-2 inhibitors of programmed cell death"/>
    <property type="match status" value="1"/>
</dbReference>
<dbReference type="PROSITE" id="PS50062">
    <property type="entry name" value="BCL2_FAMILY"/>
    <property type="match status" value="1"/>
</dbReference>
<dbReference type="PROSITE" id="PS01080">
    <property type="entry name" value="BH1"/>
    <property type="match status" value="1"/>
</dbReference>
<dbReference type="PROSITE" id="PS01258">
    <property type="entry name" value="BH2"/>
    <property type="match status" value="1"/>
</dbReference>
<dbReference type="PROSITE" id="PS01259">
    <property type="entry name" value="BH3"/>
    <property type="match status" value="1"/>
</dbReference>
<proteinExistence type="evidence at protein level"/>